<protein>
    <recommendedName>
        <fullName evidence="19">Peptidylglycine alpha-amidating monooxygenase</fullName>
        <shortName evidence="19">PAM</shortName>
    </recommendedName>
    <domain>
        <recommendedName>
            <fullName evidence="19">Peptidylglycine alpha-hydroxylating monooxygenase</fullName>
            <shortName evidence="19">PHM</shortName>
            <ecNumber evidence="5">1.14.17.3</ecNumber>
        </recommendedName>
    </domain>
    <domain>
        <recommendedName>
            <fullName evidence="19">Peptidyl-alpha-hydroxyglycine alpha-amidating lyase</fullName>
            <ecNumber evidence="5">4.3.2.5</ecNumber>
        </recommendedName>
        <alternativeName>
            <fullName evidence="18">Peptidylamidoglycolate lyase</fullName>
            <shortName evidence="18">PAL</shortName>
        </alternativeName>
    </domain>
</protein>
<reference key="1">
    <citation type="journal article" date="1989" name="Proc. Natl. Acad. Sci. U.S.A.">
        <title>Alternative mRNA splicing generates multiple forms of peptidyl-glycine alpha-amidating monooxygenase in rat atrium.</title>
        <authorList>
            <person name="Stoffers D.A."/>
            <person name="Green C.B.R."/>
            <person name="Eipper B.A."/>
        </authorList>
    </citation>
    <scope>NUCLEOTIDE SEQUENCE [GENOMIC DNA / MRNA] (PAM-1/2)</scope>
    <source>
        <strain>Sprague-Dawley</strain>
        <tissue>Heart atrium</tissue>
    </source>
</reference>
<reference key="2">
    <citation type="journal article" date="1991" name="J. Biol. Chem.">
        <title>Characterization of novel mRNAs encoding enzymes involved in peptide alpha-amidation.</title>
        <authorList>
            <person name="Stoffers D.A."/>
            <person name="Ouafik L."/>
            <person name="Eipper B.A."/>
        </authorList>
    </citation>
    <scope>NUCLEOTIDE SEQUENCE [MRNA] (PAM-3/4)</scope>
    <source>
        <strain>Sprague-Dawley</strain>
        <tissue>Heart atrium</tissue>
    </source>
</reference>
<reference key="3">
    <citation type="journal article" date="1990" name="FEBS Lett.">
        <title>Isolation and functional expression of pituitary peptidylglycine alpha-amidating enzyme mRNA. A variant lacking the transmembrane domain.</title>
        <authorList>
            <person name="Kato I."/>
            <person name="Yonekura H."/>
            <person name="Yamamoto H."/>
            <person name="Okamoto H."/>
        </authorList>
    </citation>
    <scope>NUCLEOTIDE SEQUENCE [MRNA] (PAM-1 TO 5)</scope>
    <source>
        <strain>Wistar</strain>
        <tissue>Pituitary</tissue>
    </source>
</reference>
<reference key="4">
    <citation type="journal article" date="1990" name="Arch. Biochem. Biophys.">
        <title>Cloning and characterization of two alternatively spliced rat alpha-amidating enzyme cDNAs from rat medullary thyroid carcinoma.</title>
        <authorList>
            <person name="Bertelsen A.H."/>
            <person name="Beaudry G.A."/>
            <person name="Galella E.A."/>
            <person name="Jones B.N."/>
            <person name="Ray M.L."/>
            <person name="Mehta N.M."/>
        </authorList>
    </citation>
    <scope>NUCLEOTIDE SEQUENCE [GENOMIC DNA / MRNA] (PAM-4)</scope>
    <source>
        <strain>Sprague-Dawley</strain>
        <tissue>Liver</tissue>
    </source>
</reference>
<reference key="5">
    <citation type="journal article" date="1992" name="J. Biol. Chem.">
        <title>Alternative splicing and endoproteolytic processing generate tissue-specific forms of pituitary peptidylglycine alpha-amidating monooxygenase (PAM).</title>
        <authorList>
            <person name="Eipper B.A."/>
            <person name="Green C.B."/>
            <person name="Campbell T.A."/>
            <person name="Stoffers D.A."/>
            <person name="Keutmann H.T."/>
            <person name="Mains R.E."/>
            <person name="Ouafik L."/>
        </authorList>
    </citation>
    <scope>NUCLEOTIDE SEQUENCE [MRNA]</scope>
    <scope>ALTERNATIVE SPLICING</scope>
</reference>
<reference key="6">
    <citation type="journal article" date="1990" name="J. Biol. Chem.">
        <title>Purification and characterization of functional recombinant alpha-amidating enzyme secreted from mammalian cells.</title>
        <authorList>
            <person name="Beaudry G.A."/>
            <person name="Mehta N.M."/>
            <person name="Ray M.L."/>
            <person name="Bertelsen A.H."/>
        </authorList>
    </citation>
    <scope>PROTEIN SEQUENCE OF 26-42</scope>
    <scope>GLYCOSYLATION AT ASN-765</scope>
</reference>
<reference key="7">
    <citation type="journal article" date="1992" name="Mol. Endocrinol.">
        <title>The multifunctional peptidylglycine alpha-amidating monooxygenase gene: exon/intron organization of catalytic, processing, and routing domains.</title>
        <authorList>
            <person name="Ouafik L.H."/>
            <person name="Stoffers D.A."/>
            <person name="Campbell T.A."/>
            <person name="Johnson R.C."/>
            <person name="Bloomquist B.T."/>
            <person name="Mains R.E."/>
            <person name="Eipper B.A."/>
        </authorList>
    </citation>
    <scope>ALTERNATIVE SPLICING</scope>
</reference>
<reference key="8">
    <citation type="journal article" date="1995" name="Biochemistry">
        <title>The catalytic core of peptidylglycine alpha-hydroxylating monooxygenase: investigation by site-directed mutagenesis, Cu X-ray absorption spectroscopy, and electron paramagnetic resonance.</title>
        <authorList>
            <person name="Eipper B.A."/>
            <person name="Quon A.S."/>
            <person name="Mains R.E."/>
            <person name="Boswell J.S."/>
            <person name="Blackburn N.J."/>
        </authorList>
    </citation>
    <scope>FUNCTION</scope>
    <scope>CATALYTIC ACTIVITY</scope>
    <scope>COFACTOR</scope>
    <scope>MUTAGENESIS OF HIS-108; HIS-244 AND MET-314</scope>
</reference>
<reference key="9">
    <citation type="journal article" date="1998" name="J. Biol. Chem.">
        <title>P-CIP1, a novel protein that interacts with the cytosolic domain of peptidylglycine alpha-amidating monooxygenase, is associated with endosomes.</title>
        <authorList>
            <person name="Chen L."/>
            <person name="Johnson R.C."/>
            <person name="Milgram S.L."/>
        </authorList>
    </citation>
    <scope>INTERACTION WITH RASSF9</scope>
</reference>
<reference key="10">
    <citation type="journal article" date="1999" name="Biochemistry">
        <title>N-acylglycine amidation: implications for the biosynthesis of fatty acid primary amides.</title>
        <authorList>
            <person name="Wilcox B.J."/>
            <person name="Ritenour-Rodgers K.J."/>
            <person name="Asser A.S."/>
            <person name="Baumgart L.E."/>
            <person name="Baumgart M.A."/>
            <person name="Boger D.L."/>
            <person name="DeBlassio J.L."/>
            <person name="deLong M.A."/>
            <person name="Glufke U."/>
            <person name="Henz M.E."/>
            <person name="King L. III"/>
            <person name="Merkler K.A."/>
            <person name="Patterson J.E."/>
            <person name="Robleski J.J."/>
            <person name="Vederas J.C."/>
            <person name="Merkler D.J."/>
        </authorList>
    </citation>
    <scope>FUNCTION</scope>
    <scope>CATALYTIC ACTIVITY</scope>
</reference>
<reference key="11">
    <citation type="journal article" date="2002" name="Biochemistry">
        <title>Essential features of the catalytic core of peptidyl-alpha-hydroxyglycine alpha-amidating lyase.</title>
        <authorList>
            <person name="Kolhekar A.S."/>
            <person name="Bell J."/>
            <person name="Shiozaki E.N."/>
            <person name="Jin L."/>
            <person name="Keutmann H.T."/>
            <person name="Hand T.A."/>
            <person name="Mains R.E."/>
            <person name="Eipper B.A."/>
        </authorList>
    </citation>
    <scope>DISULFIDE BONDS IN CATALYTIC DOMAIN</scope>
</reference>
<reference key="12">
    <citation type="journal article" date="2012" name="Nat. Commun.">
        <title>Quantitative maps of protein phosphorylation sites across 14 different rat organs and tissues.</title>
        <authorList>
            <person name="Lundby A."/>
            <person name="Secher A."/>
            <person name="Lage K."/>
            <person name="Nordsborg N.B."/>
            <person name="Dmytriyev A."/>
            <person name="Lundby C."/>
            <person name="Olsen J.V."/>
        </authorList>
    </citation>
    <scope>PHOSPHORYLATION [LARGE SCALE ANALYSIS] AT SER-945; SER-949; THR-959 AND SER-961</scope>
    <scope>IDENTIFICATION BY MASS SPECTROMETRY [LARGE SCALE ANALYSIS]</scope>
</reference>
<reference evidence="24 42" key="13">
    <citation type="journal article" date="1999" name="Nat. Struct. Biol.">
        <title>Substrate-mediated electron transfer in peptidylglycine alpha-hydroxylating monooxygenase.</title>
        <authorList>
            <person name="Prigge S.T."/>
            <person name="Kolhekar A.S."/>
            <person name="Eipper B.A."/>
            <person name="Mains R.E."/>
            <person name="Amzel L.M."/>
        </authorList>
    </citation>
    <scope>X-RAY CRYSTALLOGRAPHY (2.10 ANGSTROMS) OF 45-354 IN COMPLEX WITH CU(2+)</scope>
    <scope>COFACTOR</scope>
</reference>
<reference evidence="25" key="14">
    <citation type="journal article" date="2004" name="Science">
        <title>Dioxygen binds end-on to mononuclear copper in a precatalytic enzyme complex.</title>
        <authorList>
            <person name="Prigge S.T."/>
            <person name="Eipper B.A."/>
            <person name="Mains R.E."/>
            <person name="Amzel L.M."/>
        </authorList>
    </citation>
    <scope>X-RAY CRYSTALLOGRAPHY (1.85 ANGSTROMS) OF 43-356 IN COMPLEX WITH CU(2+)</scope>
    <scope>COFACTOR</scope>
    <scope>SUBUNIT</scope>
    <scope>DISULFIDE BONDS</scope>
</reference>
<reference evidence="26 27 28 29" key="15">
    <citation type="journal article" date="2005" name="Biophys. J.">
        <title>The catalytic copper of peptidylglycine alpha-hydroxylating monooxygenase also plays a critical structural role.</title>
        <authorList>
            <person name="Siebert X."/>
            <person name="Eipper B.A."/>
            <person name="Mains R.E."/>
            <person name="Prigge S.T."/>
            <person name="Blackburn N.J."/>
            <person name="Amzel L.M."/>
        </authorList>
    </citation>
    <scope>X-RAY CRYSTALLOGRAPHY (1.70 ANGSTROMS) OF 47-355 IN COMPLEX WITH CU(2+)</scope>
    <scope>COFACTOR</scope>
    <scope>DISULFIDE BONDS</scope>
</reference>
<reference evidence="30 31" key="16">
    <citation type="journal article" date="2009" name="Structure">
        <title>Amidation of bioactive peptides: the structure of the lyase domain of the amidating enzyme.</title>
        <authorList>
            <person name="Chufan E.E."/>
            <person name="De M."/>
            <person name="Eipper B.A."/>
            <person name="Mains R.E."/>
            <person name="Amzel L.M."/>
        </authorList>
    </citation>
    <scope>X-RAY CRYSTALLOGRAPHY (2.35 ANGSTROMS) OF 498-820 IN COMPLEX WITH ZINC; CALCIUM AND ALPHA-HYDROXYHIPPURIC ACID</scope>
    <scope>SUBUNIT</scope>
    <scope>COFACTOR</scope>
    <scope>MUTAGENESIS OF ARG-533; ARG-706; MET-784 AND ASP-787</scope>
    <scope>BIOPHYSICOCHEMICAL PROPERTIES</scope>
    <scope>ACTIVITY REGULATION</scope>
    <scope>REGION</scope>
</reference>
<reference evidence="32 33 34 35 36 37 38 39 40 41" key="17">
    <citation type="journal article" date="2010" name="J. Am. Chem. Soc.">
        <title>Differential reactivity between two copper sites in peptidylglycine alpha-hydroxylating monooxygenase.</title>
        <authorList>
            <person name="Chufan E.E."/>
            <person name="Prigge S.T."/>
            <person name="Siebert X."/>
            <person name="Eipper B.A."/>
            <person name="Mains R.E."/>
            <person name="Amzel L.M."/>
        </authorList>
    </citation>
    <scope>X-RAY CRYSTALLOGRAPHY (2.00 ANGSTROMS) OF 43-356 IN COMPLEX WITH CU(2+)</scope>
    <scope>SUBUNIT</scope>
    <scope>COFACTOR</scope>
    <scope>DISULFIDE BONDS</scope>
</reference>
<reference evidence="43" key="18">
    <citation type="journal article" date="2013" name="J. Biol. Inorg. Chem.">
        <title>Coordination of peroxide to the Cu(M) center of peptidylglycine alpha-hydroxylating monooxygenase (PHM): structural and computational study.</title>
        <authorList>
            <person name="Rudzka K."/>
            <person name="Moreno D.M."/>
            <person name="Eipper B."/>
            <person name="Mains R."/>
            <person name="Estrin D.A."/>
            <person name="Amzel L.M."/>
        </authorList>
    </citation>
    <scope>X-RAY CRYSTALLOGRAPHY (1.98 ANGSTROMS) OF 45-356 IN COMPLEX WITH CU(2+)</scope>
    <scope>SUBUNIT</scope>
    <scope>COFACTOR</scope>
    <scope>DISULFIDE BONDS</scope>
</reference>
<reference evidence="44 45 46 47 48 49 50 51 52" key="19">
    <citation type="journal article" date="2018" name="Commun. Biol.">
        <title>Effects of copper occupancy on the conformational landscape of peptidylglycine alpha-hydroxylating monooxygenase.</title>
        <authorList>
            <person name="Maheshwari S."/>
            <person name="Shimokawa C."/>
            <person name="Rudzka K."/>
            <person name="Kline C.D."/>
            <person name="Eipper B.A."/>
            <person name="Mains R.E."/>
            <person name="Gabelli S.B."/>
            <person name="Blackburn N."/>
            <person name="Amzel L.M."/>
        </authorList>
    </citation>
    <scope>X-RAY CRYSTALLOGRAPHY (1.79 ANGSTROMS) OF 45-356 OF MUTANT ALA-107; ALA-108 AND ALA-172 IN COMPLEX WITH CU(2+)</scope>
    <scope>SUBUNIT</scope>
    <scope>COFACTOR</scope>
    <scope>DISULFIDE BONDS</scope>
    <scope>MUTAGENESIS OF HIS-107; HIS-108 AND HIS-172</scope>
</reference>
<reference evidence="53 54 55" key="20">
    <citation type="journal article" date="2023" name="Protein Sci.">
        <title>New structures reveal flexible dynamics between the subdomains of peptidylglycine monooxygenase. Implications for an open to closed mechanism.</title>
        <authorList>
            <person name="Arias R.J."/>
            <person name="Welch E.F."/>
            <person name="Blackburn N.J."/>
        </authorList>
    </citation>
    <scope>X-RAY CRYSTALLOGRAPHY (2.05 ANGSTROMS) OF 45-354 OF MUTANT ALA-272IN COMPLEX WITH CU(2+)</scope>
    <scope>COFACTOR</scope>
    <scope>DISULFIDE BONDS</scope>
    <scope>FUNCTION</scope>
    <scope>CATALYTIC ACTIVITY</scope>
    <scope>BIOPHYSICOCHEMICAL PROPERTIES</scope>
    <scope>MUTAGENESIS OF GLN-272</scope>
</reference>
<gene>
    <name evidence="18 23" type="primary">Pam</name>
</gene>
<evidence type="ECO:0000250" key="1">
    <source>
        <dbReference type="UniProtKB" id="P10731"/>
    </source>
</evidence>
<evidence type="ECO:0000250" key="2">
    <source>
        <dbReference type="UniProtKB" id="P19021"/>
    </source>
</evidence>
<evidence type="ECO:0000255" key="3"/>
<evidence type="ECO:0000256" key="4">
    <source>
        <dbReference type="SAM" id="MobiDB-lite"/>
    </source>
</evidence>
<evidence type="ECO:0000269" key="5">
    <source>
    </source>
</evidence>
<evidence type="ECO:0000269" key="6">
    <source>
    </source>
</evidence>
<evidence type="ECO:0000269" key="7">
    <source>
    </source>
</evidence>
<evidence type="ECO:0000269" key="8">
    <source>
    </source>
</evidence>
<evidence type="ECO:0000269" key="9">
    <source>
    </source>
</evidence>
<evidence type="ECO:0000269" key="10">
    <source>
    </source>
</evidence>
<evidence type="ECO:0000269" key="11">
    <source>
    </source>
</evidence>
<evidence type="ECO:0000269" key="12">
    <source>
    </source>
</evidence>
<evidence type="ECO:0000269" key="13">
    <source>
    </source>
</evidence>
<evidence type="ECO:0000269" key="14">
    <source>
    </source>
</evidence>
<evidence type="ECO:0000269" key="15">
    <source>
    </source>
</evidence>
<evidence type="ECO:0000269" key="16">
    <source>
    </source>
</evidence>
<evidence type="ECO:0000269" key="17">
    <source>
    </source>
</evidence>
<evidence type="ECO:0000303" key="18">
    <source>
    </source>
</evidence>
<evidence type="ECO:0000303" key="19">
    <source>
    </source>
</evidence>
<evidence type="ECO:0000305" key="20"/>
<evidence type="ECO:0000305" key="21">
    <source>
    </source>
</evidence>
<evidence type="ECO:0000305" key="22">
    <source>
    </source>
</evidence>
<evidence type="ECO:0000312" key="23">
    <source>
        <dbReference type="RGD" id="3252"/>
    </source>
</evidence>
<evidence type="ECO:0007744" key="24">
    <source>
        <dbReference type="PDB" id="1OPM"/>
    </source>
</evidence>
<evidence type="ECO:0007744" key="25">
    <source>
        <dbReference type="PDB" id="1SDW"/>
    </source>
</evidence>
<evidence type="ECO:0007744" key="26">
    <source>
        <dbReference type="PDB" id="1YI9"/>
    </source>
</evidence>
<evidence type="ECO:0007744" key="27">
    <source>
        <dbReference type="PDB" id="1YIP"/>
    </source>
</evidence>
<evidence type="ECO:0007744" key="28">
    <source>
        <dbReference type="PDB" id="1YJK"/>
    </source>
</evidence>
<evidence type="ECO:0007744" key="29">
    <source>
        <dbReference type="PDB" id="1YJL"/>
    </source>
</evidence>
<evidence type="ECO:0007744" key="30">
    <source>
        <dbReference type="PDB" id="3FVZ"/>
    </source>
</evidence>
<evidence type="ECO:0007744" key="31">
    <source>
        <dbReference type="PDB" id="3FW0"/>
    </source>
</evidence>
<evidence type="ECO:0007744" key="32">
    <source>
        <dbReference type="PDB" id="3MIB"/>
    </source>
</evidence>
<evidence type="ECO:0007744" key="33">
    <source>
        <dbReference type="PDB" id="3MIC"/>
    </source>
</evidence>
<evidence type="ECO:0007744" key="34">
    <source>
        <dbReference type="PDB" id="3MID"/>
    </source>
</evidence>
<evidence type="ECO:0007744" key="35">
    <source>
        <dbReference type="PDB" id="3MIE"/>
    </source>
</evidence>
<evidence type="ECO:0007744" key="36">
    <source>
        <dbReference type="PDB" id="3MIF"/>
    </source>
</evidence>
<evidence type="ECO:0007744" key="37">
    <source>
        <dbReference type="PDB" id="3MIG"/>
    </source>
</evidence>
<evidence type="ECO:0007744" key="38">
    <source>
        <dbReference type="PDB" id="3MIH"/>
    </source>
</evidence>
<evidence type="ECO:0007744" key="39">
    <source>
        <dbReference type="PDB" id="3MLJ"/>
    </source>
</evidence>
<evidence type="ECO:0007744" key="40">
    <source>
        <dbReference type="PDB" id="3MLK"/>
    </source>
</evidence>
<evidence type="ECO:0007744" key="41">
    <source>
        <dbReference type="PDB" id="3MLL"/>
    </source>
</evidence>
<evidence type="ECO:0007744" key="42">
    <source>
        <dbReference type="PDB" id="3PHM"/>
    </source>
</evidence>
<evidence type="ECO:0007744" key="43">
    <source>
        <dbReference type="PDB" id="4E4Z"/>
    </source>
</evidence>
<evidence type="ECO:0007744" key="44">
    <source>
        <dbReference type="PDB" id="5WJA"/>
    </source>
</evidence>
<evidence type="ECO:0007744" key="45">
    <source>
        <dbReference type="PDB" id="5WKW"/>
    </source>
</evidence>
<evidence type="ECO:0007744" key="46">
    <source>
        <dbReference type="PDB" id="5WM0"/>
    </source>
</evidence>
<evidence type="ECO:0007744" key="47">
    <source>
        <dbReference type="PDB" id="6ALA"/>
    </source>
</evidence>
<evidence type="ECO:0007744" key="48">
    <source>
        <dbReference type="PDB" id="6ALV"/>
    </source>
</evidence>
<evidence type="ECO:0007744" key="49">
    <source>
        <dbReference type="PDB" id="6AMP"/>
    </source>
</evidence>
<evidence type="ECO:0007744" key="50">
    <source>
        <dbReference type="PDB" id="6AN3"/>
    </source>
</evidence>
<evidence type="ECO:0007744" key="51">
    <source>
        <dbReference type="PDB" id="6AO6"/>
    </source>
</evidence>
<evidence type="ECO:0007744" key="52">
    <source>
        <dbReference type="PDB" id="6AY0"/>
    </source>
</evidence>
<evidence type="ECO:0007744" key="53">
    <source>
        <dbReference type="PDB" id="8DSJ"/>
    </source>
</evidence>
<evidence type="ECO:0007744" key="54">
    <source>
        <dbReference type="PDB" id="8DSL"/>
    </source>
</evidence>
<evidence type="ECO:0007744" key="55">
    <source>
        <dbReference type="PDB" id="8DSN"/>
    </source>
</evidence>
<evidence type="ECO:0007744" key="56">
    <source>
    </source>
</evidence>
<evidence type="ECO:0007829" key="57">
    <source>
        <dbReference type="PDB" id="1PHM"/>
    </source>
</evidence>
<evidence type="ECO:0007829" key="58">
    <source>
        <dbReference type="PDB" id="1SDW"/>
    </source>
</evidence>
<evidence type="ECO:0007829" key="59">
    <source>
        <dbReference type="PDB" id="1YI9"/>
    </source>
</evidence>
<evidence type="ECO:0007829" key="60">
    <source>
        <dbReference type="PDB" id="3FVZ"/>
    </source>
</evidence>
<evidence type="ECO:0007829" key="61">
    <source>
        <dbReference type="PDB" id="5WKW"/>
    </source>
</evidence>
<evidence type="ECO:0007829" key="62">
    <source>
        <dbReference type="PDB" id="6ALV"/>
    </source>
</evidence>
<evidence type="ECO:0007829" key="63">
    <source>
        <dbReference type="PDB" id="8DSJ"/>
    </source>
</evidence>
<evidence type="ECO:0007829" key="64">
    <source>
        <dbReference type="PDB" id="8DSN"/>
    </source>
</evidence>
<proteinExistence type="evidence at protein level"/>
<dbReference type="EC" id="1.14.17.3" evidence="5"/>
<dbReference type="EC" id="4.3.2.5" evidence="5"/>
<dbReference type="EMBL" id="U52650">
    <property type="protein sequence ID" value="AAC05602.1"/>
    <property type="molecule type" value="Genomic_DNA"/>
</dbReference>
<dbReference type="EMBL" id="U52639">
    <property type="protein sequence ID" value="AAC05602.1"/>
    <property type="status" value="JOINED"/>
    <property type="molecule type" value="Genomic_DNA"/>
</dbReference>
<dbReference type="EMBL" id="U52640">
    <property type="protein sequence ID" value="AAC05602.1"/>
    <property type="status" value="JOINED"/>
    <property type="molecule type" value="Genomic_DNA"/>
</dbReference>
<dbReference type="EMBL" id="U52641">
    <property type="protein sequence ID" value="AAC05602.1"/>
    <property type="status" value="JOINED"/>
    <property type="molecule type" value="Genomic_DNA"/>
</dbReference>
<dbReference type="EMBL" id="U52642">
    <property type="protein sequence ID" value="AAC05602.1"/>
    <property type="status" value="JOINED"/>
    <property type="molecule type" value="Genomic_DNA"/>
</dbReference>
<dbReference type="EMBL" id="U52643">
    <property type="protein sequence ID" value="AAC05602.1"/>
    <property type="status" value="JOINED"/>
    <property type="molecule type" value="Genomic_DNA"/>
</dbReference>
<dbReference type="EMBL" id="U52644">
    <property type="protein sequence ID" value="AAC05602.1"/>
    <property type="status" value="JOINED"/>
    <property type="molecule type" value="Genomic_DNA"/>
</dbReference>
<dbReference type="EMBL" id="U52645">
    <property type="protein sequence ID" value="AAC05602.1"/>
    <property type="status" value="JOINED"/>
    <property type="molecule type" value="Genomic_DNA"/>
</dbReference>
<dbReference type="EMBL" id="U52646">
    <property type="protein sequence ID" value="AAC05602.1"/>
    <property type="status" value="JOINED"/>
    <property type="molecule type" value="Genomic_DNA"/>
</dbReference>
<dbReference type="EMBL" id="U52647">
    <property type="protein sequence ID" value="AAC05602.1"/>
    <property type="status" value="JOINED"/>
    <property type="molecule type" value="Genomic_DNA"/>
</dbReference>
<dbReference type="EMBL" id="U52648">
    <property type="protein sequence ID" value="AAC05602.1"/>
    <property type="status" value="JOINED"/>
    <property type="molecule type" value="Genomic_DNA"/>
</dbReference>
<dbReference type="EMBL" id="U52649">
    <property type="protein sequence ID" value="AAC05602.1"/>
    <property type="status" value="JOINED"/>
    <property type="molecule type" value="Genomic_DNA"/>
</dbReference>
<dbReference type="EMBL" id="U52653">
    <property type="protein sequence ID" value="AAC05603.1"/>
    <property type="molecule type" value="Genomic_DNA"/>
</dbReference>
<dbReference type="EMBL" id="U52639">
    <property type="protein sequence ID" value="AAC05603.1"/>
    <property type="status" value="JOINED"/>
    <property type="molecule type" value="Genomic_DNA"/>
</dbReference>
<dbReference type="EMBL" id="U52640">
    <property type="protein sequence ID" value="AAC05603.1"/>
    <property type="status" value="JOINED"/>
    <property type="molecule type" value="Genomic_DNA"/>
</dbReference>
<dbReference type="EMBL" id="U52641">
    <property type="protein sequence ID" value="AAC05603.1"/>
    <property type="status" value="JOINED"/>
    <property type="molecule type" value="Genomic_DNA"/>
</dbReference>
<dbReference type="EMBL" id="U52642">
    <property type="protein sequence ID" value="AAC05603.1"/>
    <property type="status" value="JOINED"/>
    <property type="molecule type" value="Genomic_DNA"/>
</dbReference>
<dbReference type="EMBL" id="U52643">
    <property type="protein sequence ID" value="AAC05603.1"/>
    <property type="status" value="JOINED"/>
    <property type="molecule type" value="Genomic_DNA"/>
</dbReference>
<dbReference type="EMBL" id="U52644">
    <property type="protein sequence ID" value="AAC05603.1"/>
    <property type="status" value="JOINED"/>
    <property type="molecule type" value="Genomic_DNA"/>
</dbReference>
<dbReference type="EMBL" id="U52645">
    <property type="protein sequence ID" value="AAC05603.1"/>
    <property type="status" value="JOINED"/>
    <property type="molecule type" value="Genomic_DNA"/>
</dbReference>
<dbReference type="EMBL" id="U52646">
    <property type="protein sequence ID" value="AAC05603.1"/>
    <property type="status" value="JOINED"/>
    <property type="molecule type" value="Genomic_DNA"/>
</dbReference>
<dbReference type="EMBL" id="U52647">
    <property type="protein sequence ID" value="AAC05603.1"/>
    <property type="status" value="JOINED"/>
    <property type="molecule type" value="Genomic_DNA"/>
</dbReference>
<dbReference type="EMBL" id="U52648">
    <property type="protein sequence ID" value="AAC05603.1"/>
    <property type="status" value="JOINED"/>
    <property type="molecule type" value="Genomic_DNA"/>
</dbReference>
<dbReference type="EMBL" id="U52649">
    <property type="protein sequence ID" value="AAC05603.1"/>
    <property type="status" value="JOINED"/>
    <property type="molecule type" value="Genomic_DNA"/>
</dbReference>
<dbReference type="EMBL" id="U52651">
    <property type="protein sequence ID" value="AAC05603.1"/>
    <property type="status" value="JOINED"/>
    <property type="molecule type" value="Genomic_DNA"/>
</dbReference>
<dbReference type="EMBL" id="U52652">
    <property type="protein sequence ID" value="AAC05603.1"/>
    <property type="status" value="JOINED"/>
    <property type="molecule type" value="Genomic_DNA"/>
</dbReference>
<dbReference type="EMBL" id="U52664">
    <property type="protein sequence ID" value="AAC05607.1"/>
    <property type="molecule type" value="Genomic_DNA"/>
</dbReference>
<dbReference type="EMBL" id="U52639">
    <property type="protein sequence ID" value="AAC05607.1"/>
    <property type="status" value="JOINED"/>
    <property type="molecule type" value="Genomic_DNA"/>
</dbReference>
<dbReference type="EMBL" id="U52640">
    <property type="protein sequence ID" value="AAC05607.1"/>
    <property type="status" value="JOINED"/>
    <property type="molecule type" value="Genomic_DNA"/>
</dbReference>
<dbReference type="EMBL" id="U52641">
    <property type="protein sequence ID" value="AAC05607.1"/>
    <property type="status" value="JOINED"/>
    <property type="molecule type" value="Genomic_DNA"/>
</dbReference>
<dbReference type="EMBL" id="U52642">
    <property type="protein sequence ID" value="AAC05607.1"/>
    <property type="status" value="JOINED"/>
    <property type="molecule type" value="Genomic_DNA"/>
</dbReference>
<dbReference type="EMBL" id="U52643">
    <property type="protein sequence ID" value="AAC05607.1"/>
    <property type="status" value="JOINED"/>
    <property type="molecule type" value="Genomic_DNA"/>
</dbReference>
<dbReference type="EMBL" id="U52644">
    <property type="protein sequence ID" value="AAC05607.1"/>
    <property type="status" value="JOINED"/>
    <property type="molecule type" value="Genomic_DNA"/>
</dbReference>
<dbReference type="EMBL" id="U52645">
    <property type="protein sequence ID" value="AAC05607.1"/>
    <property type="status" value="JOINED"/>
    <property type="molecule type" value="Genomic_DNA"/>
</dbReference>
<dbReference type="EMBL" id="U52646">
    <property type="protein sequence ID" value="AAC05607.1"/>
    <property type="status" value="JOINED"/>
    <property type="molecule type" value="Genomic_DNA"/>
</dbReference>
<dbReference type="EMBL" id="U52647">
    <property type="protein sequence ID" value="AAC05607.1"/>
    <property type="status" value="JOINED"/>
    <property type="molecule type" value="Genomic_DNA"/>
</dbReference>
<dbReference type="EMBL" id="U52648">
    <property type="protein sequence ID" value="AAC05607.1"/>
    <property type="status" value="JOINED"/>
    <property type="molecule type" value="Genomic_DNA"/>
</dbReference>
<dbReference type="EMBL" id="U52649">
    <property type="protein sequence ID" value="AAC05607.1"/>
    <property type="status" value="JOINED"/>
    <property type="molecule type" value="Genomic_DNA"/>
</dbReference>
<dbReference type="EMBL" id="U52651">
    <property type="protein sequence ID" value="AAC05607.1"/>
    <property type="status" value="JOINED"/>
    <property type="molecule type" value="Genomic_DNA"/>
</dbReference>
<dbReference type="EMBL" id="U52652">
    <property type="protein sequence ID" value="AAC05607.1"/>
    <property type="status" value="JOINED"/>
    <property type="molecule type" value="Genomic_DNA"/>
</dbReference>
<dbReference type="EMBL" id="U52653">
    <property type="protein sequence ID" value="AAC05607.1"/>
    <property type="status" value="JOINED"/>
    <property type="molecule type" value="Genomic_DNA"/>
</dbReference>
<dbReference type="EMBL" id="U52654">
    <property type="protein sequence ID" value="AAC05607.1"/>
    <property type="status" value="JOINED"/>
    <property type="molecule type" value="Genomic_DNA"/>
</dbReference>
<dbReference type="EMBL" id="U52655">
    <property type="protein sequence ID" value="AAC05607.1"/>
    <property type="status" value="JOINED"/>
    <property type="molecule type" value="Genomic_DNA"/>
</dbReference>
<dbReference type="EMBL" id="U52656">
    <property type="protein sequence ID" value="AAC05607.1"/>
    <property type="status" value="JOINED"/>
    <property type="molecule type" value="Genomic_DNA"/>
</dbReference>
<dbReference type="EMBL" id="U52657">
    <property type="protein sequence ID" value="AAC05607.1"/>
    <property type="status" value="JOINED"/>
    <property type="molecule type" value="Genomic_DNA"/>
</dbReference>
<dbReference type="EMBL" id="U52658">
    <property type="protein sequence ID" value="AAC05607.1"/>
    <property type="status" value="JOINED"/>
    <property type="molecule type" value="Genomic_DNA"/>
</dbReference>
<dbReference type="EMBL" id="U52659">
    <property type="protein sequence ID" value="AAC05607.1"/>
    <property type="status" value="JOINED"/>
    <property type="molecule type" value="Genomic_DNA"/>
</dbReference>
<dbReference type="EMBL" id="U52660">
    <property type="protein sequence ID" value="AAC05607.1"/>
    <property type="status" value="JOINED"/>
    <property type="molecule type" value="Genomic_DNA"/>
</dbReference>
<dbReference type="EMBL" id="U52661">
    <property type="protein sequence ID" value="AAC05607.1"/>
    <property type="status" value="JOINED"/>
    <property type="molecule type" value="Genomic_DNA"/>
</dbReference>
<dbReference type="EMBL" id="U52662">
    <property type="protein sequence ID" value="AAC05607.1"/>
    <property type="status" value="JOINED"/>
    <property type="molecule type" value="Genomic_DNA"/>
</dbReference>
<dbReference type="EMBL" id="U52663">
    <property type="protein sequence ID" value="AAC05607.1"/>
    <property type="status" value="JOINED"/>
    <property type="molecule type" value="Genomic_DNA"/>
</dbReference>
<dbReference type="EMBL" id="U52664">
    <property type="protein sequence ID" value="AAC05605.1"/>
    <property type="molecule type" value="Genomic_DNA"/>
</dbReference>
<dbReference type="EMBL" id="U52639">
    <property type="protein sequence ID" value="AAC05605.1"/>
    <property type="status" value="JOINED"/>
    <property type="molecule type" value="Genomic_DNA"/>
</dbReference>
<dbReference type="EMBL" id="U52640">
    <property type="protein sequence ID" value="AAC05605.1"/>
    <property type="status" value="JOINED"/>
    <property type="molecule type" value="Genomic_DNA"/>
</dbReference>
<dbReference type="EMBL" id="U52641">
    <property type="protein sequence ID" value="AAC05605.1"/>
    <property type="status" value="JOINED"/>
    <property type="molecule type" value="Genomic_DNA"/>
</dbReference>
<dbReference type="EMBL" id="U52642">
    <property type="protein sequence ID" value="AAC05605.1"/>
    <property type="status" value="JOINED"/>
    <property type="molecule type" value="Genomic_DNA"/>
</dbReference>
<dbReference type="EMBL" id="U52643">
    <property type="protein sequence ID" value="AAC05605.1"/>
    <property type="status" value="JOINED"/>
    <property type="molecule type" value="Genomic_DNA"/>
</dbReference>
<dbReference type="EMBL" id="U52644">
    <property type="protein sequence ID" value="AAC05605.1"/>
    <property type="status" value="JOINED"/>
    <property type="molecule type" value="Genomic_DNA"/>
</dbReference>
<dbReference type="EMBL" id="U52645">
    <property type="protein sequence ID" value="AAC05605.1"/>
    <property type="status" value="JOINED"/>
    <property type="molecule type" value="Genomic_DNA"/>
</dbReference>
<dbReference type="EMBL" id="U52646">
    <property type="protein sequence ID" value="AAC05605.1"/>
    <property type="status" value="JOINED"/>
    <property type="molecule type" value="Genomic_DNA"/>
</dbReference>
<dbReference type="EMBL" id="U52647">
    <property type="protein sequence ID" value="AAC05605.1"/>
    <property type="status" value="JOINED"/>
    <property type="molecule type" value="Genomic_DNA"/>
</dbReference>
<dbReference type="EMBL" id="U52648">
    <property type="protein sequence ID" value="AAC05605.1"/>
    <property type="status" value="JOINED"/>
    <property type="molecule type" value="Genomic_DNA"/>
</dbReference>
<dbReference type="EMBL" id="U52649">
    <property type="protein sequence ID" value="AAC05605.1"/>
    <property type="status" value="JOINED"/>
    <property type="molecule type" value="Genomic_DNA"/>
</dbReference>
<dbReference type="EMBL" id="U52651">
    <property type="protein sequence ID" value="AAC05605.1"/>
    <property type="status" value="JOINED"/>
    <property type="molecule type" value="Genomic_DNA"/>
</dbReference>
<dbReference type="EMBL" id="U52652">
    <property type="protein sequence ID" value="AAC05605.1"/>
    <property type="status" value="JOINED"/>
    <property type="molecule type" value="Genomic_DNA"/>
</dbReference>
<dbReference type="EMBL" id="U52654">
    <property type="protein sequence ID" value="AAC05605.1"/>
    <property type="status" value="JOINED"/>
    <property type="molecule type" value="Genomic_DNA"/>
</dbReference>
<dbReference type="EMBL" id="U52655">
    <property type="protein sequence ID" value="AAC05605.1"/>
    <property type="status" value="JOINED"/>
    <property type="molecule type" value="Genomic_DNA"/>
</dbReference>
<dbReference type="EMBL" id="U52656">
    <property type="protein sequence ID" value="AAC05605.1"/>
    <property type="status" value="JOINED"/>
    <property type="molecule type" value="Genomic_DNA"/>
</dbReference>
<dbReference type="EMBL" id="U52657">
    <property type="protein sequence ID" value="AAC05605.1"/>
    <property type="status" value="JOINED"/>
    <property type="molecule type" value="Genomic_DNA"/>
</dbReference>
<dbReference type="EMBL" id="U52658">
    <property type="protein sequence ID" value="AAC05605.1"/>
    <property type="status" value="JOINED"/>
    <property type="molecule type" value="Genomic_DNA"/>
</dbReference>
<dbReference type="EMBL" id="U52659">
    <property type="protein sequence ID" value="AAC05605.1"/>
    <property type="status" value="JOINED"/>
    <property type="molecule type" value="Genomic_DNA"/>
</dbReference>
<dbReference type="EMBL" id="U52660">
    <property type="protein sequence ID" value="AAC05605.1"/>
    <property type="status" value="JOINED"/>
    <property type="molecule type" value="Genomic_DNA"/>
</dbReference>
<dbReference type="EMBL" id="U52661">
    <property type="protein sequence ID" value="AAC05605.1"/>
    <property type="status" value="JOINED"/>
    <property type="molecule type" value="Genomic_DNA"/>
</dbReference>
<dbReference type="EMBL" id="U52662">
    <property type="protein sequence ID" value="AAC05605.1"/>
    <property type="status" value="JOINED"/>
    <property type="molecule type" value="Genomic_DNA"/>
</dbReference>
<dbReference type="EMBL" id="U52663">
    <property type="protein sequence ID" value="AAC05605.1"/>
    <property type="status" value="JOINED"/>
    <property type="molecule type" value="Genomic_DNA"/>
</dbReference>
<dbReference type="EMBL" id="U52664">
    <property type="protein sequence ID" value="AAC05604.1"/>
    <property type="molecule type" value="Genomic_DNA"/>
</dbReference>
<dbReference type="EMBL" id="U52639">
    <property type="protein sequence ID" value="AAC05604.1"/>
    <property type="status" value="JOINED"/>
    <property type="molecule type" value="Genomic_DNA"/>
</dbReference>
<dbReference type="EMBL" id="U52640">
    <property type="protein sequence ID" value="AAC05604.1"/>
    <property type="status" value="JOINED"/>
    <property type="molecule type" value="Genomic_DNA"/>
</dbReference>
<dbReference type="EMBL" id="U52641">
    <property type="protein sequence ID" value="AAC05604.1"/>
    <property type="status" value="JOINED"/>
    <property type="molecule type" value="Genomic_DNA"/>
</dbReference>
<dbReference type="EMBL" id="U52642">
    <property type="protein sequence ID" value="AAC05604.1"/>
    <property type="status" value="JOINED"/>
    <property type="molecule type" value="Genomic_DNA"/>
</dbReference>
<dbReference type="EMBL" id="U52643">
    <property type="protein sequence ID" value="AAC05604.1"/>
    <property type="status" value="JOINED"/>
    <property type="molecule type" value="Genomic_DNA"/>
</dbReference>
<dbReference type="EMBL" id="U52644">
    <property type="protein sequence ID" value="AAC05604.1"/>
    <property type="status" value="JOINED"/>
    <property type="molecule type" value="Genomic_DNA"/>
</dbReference>
<dbReference type="EMBL" id="U52645">
    <property type="protein sequence ID" value="AAC05604.1"/>
    <property type="status" value="JOINED"/>
    <property type="molecule type" value="Genomic_DNA"/>
</dbReference>
<dbReference type="EMBL" id="U52646">
    <property type="protein sequence ID" value="AAC05604.1"/>
    <property type="status" value="JOINED"/>
    <property type="molecule type" value="Genomic_DNA"/>
</dbReference>
<dbReference type="EMBL" id="U52647">
    <property type="protein sequence ID" value="AAC05604.1"/>
    <property type="status" value="JOINED"/>
    <property type="molecule type" value="Genomic_DNA"/>
</dbReference>
<dbReference type="EMBL" id="U52648">
    <property type="protein sequence ID" value="AAC05604.1"/>
    <property type="status" value="JOINED"/>
    <property type="molecule type" value="Genomic_DNA"/>
</dbReference>
<dbReference type="EMBL" id="U52649">
    <property type="protein sequence ID" value="AAC05604.1"/>
    <property type="status" value="JOINED"/>
    <property type="molecule type" value="Genomic_DNA"/>
</dbReference>
<dbReference type="EMBL" id="U52651">
    <property type="protein sequence ID" value="AAC05604.1"/>
    <property type="status" value="JOINED"/>
    <property type="molecule type" value="Genomic_DNA"/>
</dbReference>
<dbReference type="EMBL" id="U52652">
    <property type="protein sequence ID" value="AAC05604.1"/>
    <property type="status" value="JOINED"/>
    <property type="molecule type" value="Genomic_DNA"/>
</dbReference>
<dbReference type="EMBL" id="U52654">
    <property type="protein sequence ID" value="AAC05604.1"/>
    <property type="status" value="JOINED"/>
    <property type="molecule type" value="Genomic_DNA"/>
</dbReference>
<dbReference type="EMBL" id="U52655">
    <property type="protein sequence ID" value="AAC05604.1"/>
    <property type="status" value="JOINED"/>
    <property type="molecule type" value="Genomic_DNA"/>
</dbReference>
<dbReference type="EMBL" id="U52656">
    <property type="protein sequence ID" value="AAC05604.1"/>
    <property type="status" value="JOINED"/>
    <property type="molecule type" value="Genomic_DNA"/>
</dbReference>
<dbReference type="EMBL" id="U52657">
    <property type="protein sequence ID" value="AAC05604.1"/>
    <property type="status" value="JOINED"/>
    <property type="molecule type" value="Genomic_DNA"/>
</dbReference>
<dbReference type="EMBL" id="U52658">
    <property type="protein sequence ID" value="AAC05604.1"/>
    <property type="status" value="JOINED"/>
    <property type="molecule type" value="Genomic_DNA"/>
</dbReference>
<dbReference type="EMBL" id="U52659">
    <property type="protein sequence ID" value="AAC05604.1"/>
    <property type="status" value="JOINED"/>
    <property type="molecule type" value="Genomic_DNA"/>
</dbReference>
<dbReference type="EMBL" id="U52660">
    <property type="protein sequence ID" value="AAC05604.1"/>
    <property type="status" value="JOINED"/>
    <property type="molecule type" value="Genomic_DNA"/>
</dbReference>
<dbReference type="EMBL" id="U52661">
    <property type="protein sequence ID" value="AAC05604.1"/>
    <property type="status" value="JOINED"/>
    <property type="molecule type" value="Genomic_DNA"/>
</dbReference>
<dbReference type="EMBL" id="U52662">
    <property type="protein sequence ID" value="AAC05604.1"/>
    <property type="status" value="JOINED"/>
    <property type="molecule type" value="Genomic_DNA"/>
</dbReference>
<dbReference type="EMBL" id="U52664">
    <property type="protein sequence ID" value="AAC05608.1"/>
    <property type="molecule type" value="Genomic_DNA"/>
</dbReference>
<dbReference type="EMBL" id="U52639">
    <property type="protein sequence ID" value="AAC05608.1"/>
    <property type="status" value="JOINED"/>
    <property type="molecule type" value="Genomic_DNA"/>
</dbReference>
<dbReference type="EMBL" id="U52640">
    <property type="protein sequence ID" value="AAC05608.1"/>
    <property type="status" value="JOINED"/>
    <property type="molecule type" value="Genomic_DNA"/>
</dbReference>
<dbReference type="EMBL" id="U52641">
    <property type="protein sequence ID" value="AAC05608.1"/>
    <property type="status" value="JOINED"/>
    <property type="molecule type" value="Genomic_DNA"/>
</dbReference>
<dbReference type="EMBL" id="U52642">
    <property type="protein sequence ID" value="AAC05608.1"/>
    <property type="status" value="JOINED"/>
    <property type="molecule type" value="Genomic_DNA"/>
</dbReference>
<dbReference type="EMBL" id="U52643">
    <property type="protein sequence ID" value="AAC05608.1"/>
    <property type="status" value="JOINED"/>
    <property type="molecule type" value="Genomic_DNA"/>
</dbReference>
<dbReference type="EMBL" id="U52644">
    <property type="protein sequence ID" value="AAC05608.1"/>
    <property type="status" value="JOINED"/>
    <property type="molecule type" value="Genomic_DNA"/>
</dbReference>
<dbReference type="EMBL" id="U52645">
    <property type="protein sequence ID" value="AAC05608.1"/>
    <property type="status" value="JOINED"/>
    <property type="molecule type" value="Genomic_DNA"/>
</dbReference>
<dbReference type="EMBL" id="U52646">
    <property type="protein sequence ID" value="AAC05608.1"/>
    <property type="status" value="JOINED"/>
    <property type="molecule type" value="Genomic_DNA"/>
</dbReference>
<dbReference type="EMBL" id="U52647">
    <property type="protein sequence ID" value="AAC05608.1"/>
    <property type="status" value="JOINED"/>
    <property type="molecule type" value="Genomic_DNA"/>
</dbReference>
<dbReference type="EMBL" id="U52648">
    <property type="protein sequence ID" value="AAC05608.1"/>
    <property type="status" value="JOINED"/>
    <property type="molecule type" value="Genomic_DNA"/>
</dbReference>
<dbReference type="EMBL" id="U52649">
    <property type="protein sequence ID" value="AAC05608.1"/>
    <property type="status" value="JOINED"/>
    <property type="molecule type" value="Genomic_DNA"/>
</dbReference>
<dbReference type="EMBL" id="U52651">
    <property type="protein sequence ID" value="AAC05608.1"/>
    <property type="status" value="JOINED"/>
    <property type="molecule type" value="Genomic_DNA"/>
</dbReference>
<dbReference type="EMBL" id="U52652">
    <property type="protein sequence ID" value="AAC05608.1"/>
    <property type="status" value="JOINED"/>
    <property type="molecule type" value="Genomic_DNA"/>
</dbReference>
<dbReference type="EMBL" id="U52654">
    <property type="protein sequence ID" value="AAC05608.1"/>
    <property type="status" value="JOINED"/>
    <property type="molecule type" value="Genomic_DNA"/>
</dbReference>
<dbReference type="EMBL" id="U52655">
    <property type="protein sequence ID" value="AAC05608.1"/>
    <property type="status" value="JOINED"/>
    <property type="molecule type" value="Genomic_DNA"/>
</dbReference>
<dbReference type="EMBL" id="U52656">
    <property type="protein sequence ID" value="AAC05608.1"/>
    <property type="status" value="JOINED"/>
    <property type="molecule type" value="Genomic_DNA"/>
</dbReference>
<dbReference type="EMBL" id="U52657">
    <property type="protein sequence ID" value="AAC05608.1"/>
    <property type="status" value="JOINED"/>
    <property type="molecule type" value="Genomic_DNA"/>
</dbReference>
<dbReference type="EMBL" id="U52658">
    <property type="protein sequence ID" value="AAC05608.1"/>
    <property type="status" value="JOINED"/>
    <property type="molecule type" value="Genomic_DNA"/>
</dbReference>
<dbReference type="EMBL" id="U52659">
    <property type="protein sequence ID" value="AAC05608.1"/>
    <property type="status" value="JOINED"/>
    <property type="molecule type" value="Genomic_DNA"/>
</dbReference>
<dbReference type="EMBL" id="U52660">
    <property type="protein sequence ID" value="AAC05608.1"/>
    <property type="status" value="JOINED"/>
    <property type="molecule type" value="Genomic_DNA"/>
</dbReference>
<dbReference type="EMBL" id="U52661">
    <property type="protein sequence ID" value="AAC05608.1"/>
    <property type="status" value="JOINED"/>
    <property type="molecule type" value="Genomic_DNA"/>
</dbReference>
<dbReference type="EMBL" id="U52664">
    <property type="protein sequence ID" value="AAC05606.1"/>
    <property type="molecule type" value="Genomic_DNA"/>
</dbReference>
<dbReference type="EMBL" id="U52639">
    <property type="protein sequence ID" value="AAC05606.1"/>
    <property type="status" value="JOINED"/>
    <property type="molecule type" value="Genomic_DNA"/>
</dbReference>
<dbReference type="EMBL" id="U52640">
    <property type="protein sequence ID" value="AAC05606.1"/>
    <property type="status" value="JOINED"/>
    <property type="molecule type" value="Genomic_DNA"/>
</dbReference>
<dbReference type="EMBL" id="U52641">
    <property type="protein sequence ID" value="AAC05606.1"/>
    <property type="status" value="JOINED"/>
    <property type="molecule type" value="Genomic_DNA"/>
</dbReference>
<dbReference type="EMBL" id="U52642">
    <property type="protein sequence ID" value="AAC05606.1"/>
    <property type="status" value="JOINED"/>
    <property type="molecule type" value="Genomic_DNA"/>
</dbReference>
<dbReference type="EMBL" id="U52643">
    <property type="protein sequence ID" value="AAC05606.1"/>
    <property type="status" value="JOINED"/>
    <property type="molecule type" value="Genomic_DNA"/>
</dbReference>
<dbReference type="EMBL" id="U52644">
    <property type="protein sequence ID" value="AAC05606.1"/>
    <property type="status" value="JOINED"/>
    <property type="molecule type" value="Genomic_DNA"/>
</dbReference>
<dbReference type="EMBL" id="U52645">
    <property type="protein sequence ID" value="AAC05606.1"/>
    <property type="status" value="JOINED"/>
    <property type="molecule type" value="Genomic_DNA"/>
</dbReference>
<dbReference type="EMBL" id="U52646">
    <property type="protein sequence ID" value="AAC05606.1"/>
    <property type="status" value="JOINED"/>
    <property type="molecule type" value="Genomic_DNA"/>
</dbReference>
<dbReference type="EMBL" id="U52647">
    <property type="protein sequence ID" value="AAC05606.1"/>
    <property type="status" value="JOINED"/>
    <property type="molecule type" value="Genomic_DNA"/>
</dbReference>
<dbReference type="EMBL" id="U52648">
    <property type="protein sequence ID" value="AAC05606.1"/>
    <property type="status" value="JOINED"/>
    <property type="molecule type" value="Genomic_DNA"/>
</dbReference>
<dbReference type="EMBL" id="U52649">
    <property type="protein sequence ID" value="AAC05606.1"/>
    <property type="status" value="JOINED"/>
    <property type="molecule type" value="Genomic_DNA"/>
</dbReference>
<dbReference type="EMBL" id="U52651">
    <property type="protein sequence ID" value="AAC05606.1"/>
    <property type="status" value="JOINED"/>
    <property type="molecule type" value="Genomic_DNA"/>
</dbReference>
<dbReference type="EMBL" id="U52652">
    <property type="protein sequence ID" value="AAC05606.1"/>
    <property type="status" value="JOINED"/>
    <property type="molecule type" value="Genomic_DNA"/>
</dbReference>
<dbReference type="EMBL" id="U52654">
    <property type="protein sequence ID" value="AAC05606.1"/>
    <property type="status" value="JOINED"/>
    <property type="molecule type" value="Genomic_DNA"/>
</dbReference>
<dbReference type="EMBL" id="U52655">
    <property type="protein sequence ID" value="AAC05606.1"/>
    <property type="status" value="JOINED"/>
    <property type="molecule type" value="Genomic_DNA"/>
</dbReference>
<dbReference type="EMBL" id="U52656">
    <property type="protein sequence ID" value="AAC05606.1"/>
    <property type="status" value="JOINED"/>
    <property type="molecule type" value="Genomic_DNA"/>
</dbReference>
<dbReference type="EMBL" id="U52657">
    <property type="protein sequence ID" value="AAC05606.1"/>
    <property type="status" value="JOINED"/>
    <property type="molecule type" value="Genomic_DNA"/>
</dbReference>
<dbReference type="EMBL" id="U52658">
    <property type="protein sequence ID" value="AAC05606.1"/>
    <property type="status" value="JOINED"/>
    <property type="molecule type" value="Genomic_DNA"/>
</dbReference>
<dbReference type="EMBL" id="U52659">
    <property type="protein sequence ID" value="AAC05606.1"/>
    <property type="status" value="JOINED"/>
    <property type="molecule type" value="Genomic_DNA"/>
</dbReference>
<dbReference type="EMBL" id="U52660">
    <property type="protein sequence ID" value="AAC05606.1"/>
    <property type="status" value="JOINED"/>
    <property type="molecule type" value="Genomic_DNA"/>
</dbReference>
<dbReference type="EMBL" id="U52661">
    <property type="protein sequence ID" value="AAC05606.1"/>
    <property type="status" value="JOINED"/>
    <property type="molecule type" value="Genomic_DNA"/>
</dbReference>
<dbReference type="EMBL" id="U52663">
    <property type="protein sequence ID" value="AAC05606.1"/>
    <property type="status" value="JOINED"/>
    <property type="molecule type" value="Genomic_DNA"/>
</dbReference>
<dbReference type="EMBL" id="M25732">
    <property type="protein sequence ID" value="AAA41803.1"/>
    <property type="molecule type" value="mRNA"/>
</dbReference>
<dbReference type="EMBL" id="M25719">
    <property type="protein sequence ID" value="AAA41804.1"/>
    <property type="molecule type" value="mRNA"/>
</dbReference>
<dbReference type="EMBL" id="M63662">
    <property type="protein sequence ID" value="AAA42068.1"/>
    <property type="status" value="ALT_SEQ"/>
    <property type="molecule type" value="mRNA"/>
</dbReference>
<dbReference type="EMBL" id="X59685">
    <property type="protein sequence ID" value="CAA42206.1"/>
    <property type="molecule type" value="mRNA"/>
</dbReference>
<dbReference type="EMBL" id="X59686">
    <property type="protein sequence ID" value="CAA42207.1"/>
    <property type="molecule type" value="mRNA"/>
</dbReference>
<dbReference type="EMBL" id="X59687">
    <property type="protein sequence ID" value="CAA42208.1"/>
    <property type="molecule type" value="mRNA"/>
</dbReference>
<dbReference type="EMBL" id="X59688">
    <property type="protein sequence ID" value="CAA42209.1"/>
    <property type="molecule type" value="mRNA"/>
</dbReference>
<dbReference type="EMBL" id="X59689">
    <property type="protein sequence ID" value="CAA42210.1"/>
    <property type="molecule type" value="mRNA"/>
</dbReference>
<dbReference type="EMBL" id="M82845">
    <property type="protein sequence ID" value="AAB00162.1"/>
    <property type="molecule type" value="mRNA"/>
</dbReference>
<dbReference type="PIR" id="A32193">
    <property type="entry name" value="URRTAP"/>
</dbReference>
<dbReference type="RefSeq" id="NP_037132.2">
    <molecule id="P14925-1"/>
    <property type="nucleotide sequence ID" value="NM_013000.2"/>
</dbReference>
<dbReference type="RefSeq" id="XP_006245660.1">
    <property type="nucleotide sequence ID" value="XM_006245598.3"/>
</dbReference>
<dbReference type="RefSeq" id="XP_006245661.1">
    <property type="nucleotide sequence ID" value="XM_006245599.3"/>
</dbReference>
<dbReference type="RefSeq" id="XP_038938968.1">
    <molecule id="P14925-1"/>
    <property type="nucleotide sequence ID" value="XM_039083040.2"/>
</dbReference>
<dbReference type="RefSeq" id="XP_038938972.1">
    <molecule id="P14925-2"/>
    <property type="nucleotide sequence ID" value="XM_039083044.2"/>
</dbReference>
<dbReference type="RefSeq" id="XP_038938975.1">
    <molecule id="P14925-5"/>
    <property type="nucleotide sequence ID" value="XM_039083047.2"/>
</dbReference>
<dbReference type="RefSeq" id="XP_038938976.1">
    <molecule id="P14925-4"/>
    <property type="nucleotide sequence ID" value="XM_039083048.2"/>
</dbReference>
<dbReference type="RefSeq" id="XP_038938977.1">
    <molecule id="P14925-3"/>
    <property type="nucleotide sequence ID" value="XM_039083049.2"/>
</dbReference>
<dbReference type="RefSeq" id="XP_063122756.1">
    <molecule id="P14925-1"/>
    <property type="nucleotide sequence ID" value="XM_063266686.1"/>
</dbReference>
<dbReference type="RefSeq" id="XP_063122758.1">
    <molecule id="P14925-2"/>
    <property type="nucleotide sequence ID" value="XM_063266688.1"/>
</dbReference>
<dbReference type="RefSeq" id="XP_063122759.1">
    <molecule id="P14925-2"/>
    <property type="nucleotide sequence ID" value="XM_063266689.1"/>
</dbReference>
<dbReference type="RefSeq" id="XP_063122761.1">
    <molecule id="P14925-5"/>
    <property type="nucleotide sequence ID" value="XM_063266691.1"/>
</dbReference>
<dbReference type="RefSeq" id="XP_063122762.1">
    <molecule id="P14925-5"/>
    <property type="nucleotide sequence ID" value="XM_063266692.1"/>
</dbReference>
<dbReference type="RefSeq" id="XP_063122764.1">
    <molecule id="P14925-4"/>
    <property type="nucleotide sequence ID" value="XM_063266694.1"/>
</dbReference>
<dbReference type="RefSeq" id="XP_063122765.1">
    <molecule id="P14925-3"/>
    <property type="nucleotide sequence ID" value="XM_063266695.1"/>
</dbReference>
<dbReference type="PDB" id="1OPM">
    <property type="method" value="X-ray"/>
    <property type="resolution" value="2.10 A"/>
    <property type="chains" value="A=45-354"/>
</dbReference>
<dbReference type="PDB" id="1PHM">
    <property type="method" value="X-ray"/>
    <property type="resolution" value="1.90 A"/>
    <property type="chains" value="A=45-354"/>
</dbReference>
<dbReference type="PDB" id="1SDW">
    <property type="method" value="X-ray"/>
    <property type="resolution" value="1.85 A"/>
    <property type="chains" value="A=43-356"/>
</dbReference>
<dbReference type="PDB" id="1YI9">
    <property type="method" value="X-ray"/>
    <property type="resolution" value="1.70 A"/>
    <property type="chains" value="A=47-355"/>
</dbReference>
<dbReference type="PDB" id="1YIP">
    <property type="method" value="X-ray"/>
    <property type="resolution" value="2.20 A"/>
    <property type="chains" value="A=45-355"/>
</dbReference>
<dbReference type="PDB" id="1YJK">
    <property type="method" value="X-ray"/>
    <property type="resolution" value="2.00 A"/>
    <property type="chains" value="A=50-355"/>
</dbReference>
<dbReference type="PDB" id="1YJL">
    <property type="method" value="X-ray"/>
    <property type="resolution" value="2.40 A"/>
    <property type="chains" value="A=50-355"/>
</dbReference>
<dbReference type="PDB" id="3FVZ">
    <property type="method" value="X-ray"/>
    <property type="resolution" value="2.35 A"/>
    <property type="chains" value="A=498-820"/>
</dbReference>
<dbReference type="PDB" id="3FW0">
    <property type="method" value="X-ray"/>
    <property type="resolution" value="2.52 A"/>
    <property type="chains" value="A=498-820"/>
</dbReference>
<dbReference type="PDB" id="3MIB">
    <property type="method" value="X-ray"/>
    <property type="resolution" value="2.35 A"/>
    <property type="chains" value="A=43-356"/>
</dbReference>
<dbReference type="PDB" id="3MIC">
    <property type="method" value="X-ray"/>
    <property type="resolution" value="2.42 A"/>
    <property type="chains" value="A=43-356"/>
</dbReference>
<dbReference type="PDB" id="3MID">
    <property type="method" value="X-ray"/>
    <property type="resolution" value="3.06 A"/>
    <property type="chains" value="A=43-356"/>
</dbReference>
<dbReference type="PDB" id="3MIE">
    <property type="method" value="X-ray"/>
    <property type="resolution" value="3.26 A"/>
    <property type="chains" value="A=43-356"/>
</dbReference>
<dbReference type="PDB" id="3MIF">
    <property type="method" value="X-ray"/>
    <property type="resolution" value="2.00 A"/>
    <property type="chains" value="A=43-356"/>
</dbReference>
<dbReference type="PDB" id="3MIG">
    <property type="method" value="X-ray"/>
    <property type="resolution" value="2.70 A"/>
    <property type="chains" value="A=43-356"/>
</dbReference>
<dbReference type="PDB" id="3MIH">
    <property type="method" value="X-ray"/>
    <property type="resolution" value="2.74 A"/>
    <property type="chains" value="A=43-356"/>
</dbReference>
<dbReference type="PDB" id="3MLJ">
    <property type="method" value="X-ray"/>
    <property type="resolution" value="2.15 A"/>
    <property type="chains" value="A=43-356"/>
</dbReference>
<dbReference type="PDB" id="3MLK">
    <property type="method" value="X-ray"/>
    <property type="resolution" value="3.10 A"/>
    <property type="chains" value="A=43-356"/>
</dbReference>
<dbReference type="PDB" id="3MLL">
    <property type="method" value="X-ray"/>
    <property type="resolution" value="3.25 A"/>
    <property type="chains" value="A=43-356"/>
</dbReference>
<dbReference type="PDB" id="3PHM">
    <property type="method" value="X-ray"/>
    <property type="resolution" value="2.10 A"/>
    <property type="chains" value="A=45-354"/>
</dbReference>
<dbReference type="PDB" id="4E4Z">
    <property type="method" value="X-ray"/>
    <property type="resolution" value="1.98 A"/>
    <property type="chains" value="A=45-356"/>
</dbReference>
<dbReference type="PDB" id="5WJA">
    <property type="method" value="X-ray"/>
    <property type="resolution" value="2.30 A"/>
    <property type="chains" value="A/D=45-356"/>
</dbReference>
<dbReference type="PDB" id="5WKW">
    <property type="method" value="X-ray"/>
    <property type="resolution" value="1.79 A"/>
    <property type="chains" value="A=45-356"/>
</dbReference>
<dbReference type="PDB" id="5WM0">
    <property type="method" value="X-ray"/>
    <property type="resolution" value="2.40 A"/>
    <property type="chains" value="A=1-976"/>
</dbReference>
<dbReference type="PDB" id="6ALA">
    <property type="method" value="X-ray"/>
    <property type="resolution" value="2.59 A"/>
    <property type="chains" value="A/C=45-356"/>
</dbReference>
<dbReference type="PDB" id="6ALV">
    <property type="method" value="X-ray"/>
    <property type="resolution" value="3.50 A"/>
    <property type="chains" value="A=45-356"/>
</dbReference>
<dbReference type="PDB" id="6AMP">
    <property type="method" value="X-ray"/>
    <property type="resolution" value="2.48 A"/>
    <property type="chains" value="A=45-356"/>
</dbReference>
<dbReference type="PDB" id="6AN3">
    <property type="method" value="X-ray"/>
    <property type="resolution" value="2.05 A"/>
    <property type="chains" value="A=45-356"/>
</dbReference>
<dbReference type="PDB" id="6AO6">
    <property type="method" value="X-ray"/>
    <property type="resolution" value="2.98 A"/>
    <property type="chains" value="A=45-356"/>
</dbReference>
<dbReference type="PDB" id="6AY0">
    <property type="method" value="X-ray"/>
    <property type="resolution" value="2.60 A"/>
    <property type="chains" value="A=45-356"/>
</dbReference>
<dbReference type="PDB" id="6NCK">
    <property type="method" value="X-ray"/>
    <property type="resolution" value="2.70 A"/>
    <property type="chains" value="A=45-356"/>
</dbReference>
<dbReference type="PDB" id="8DSJ">
    <property type="method" value="X-ray"/>
    <property type="resolution" value="2.80 A"/>
    <property type="chains" value="A/K=45-354"/>
</dbReference>
<dbReference type="PDB" id="8DSL">
    <property type="method" value="X-ray"/>
    <property type="resolution" value="2.05 A"/>
    <property type="chains" value="A/B=45-354"/>
</dbReference>
<dbReference type="PDB" id="8DSN">
    <property type="method" value="X-ray"/>
    <property type="resolution" value="2.80 A"/>
    <property type="chains" value="A/K=45-354"/>
</dbReference>
<dbReference type="PDBsum" id="1OPM"/>
<dbReference type="PDBsum" id="1PHM"/>
<dbReference type="PDBsum" id="1SDW"/>
<dbReference type="PDBsum" id="1YI9"/>
<dbReference type="PDBsum" id="1YIP"/>
<dbReference type="PDBsum" id="1YJK"/>
<dbReference type="PDBsum" id="1YJL"/>
<dbReference type="PDBsum" id="3FVZ"/>
<dbReference type="PDBsum" id="3FW0"/>
<dbReference type="PDBsum" id="3MIB"/>
<dbReference type="PDBsum" id="3MIC"/>
<dbReference type="PDBsum" id="3MID"/>
<dbReference type="PDBsum" id="3MIE"/>
<dbReference type="PDBsum" id="3MIF"/>
<dbReference type="PDBsum" id="3MIG"/>
<dbReference type="PDBsum" id="3MIH"/>
<dbReference type="PDBsum" id="3MLJ"/>
<dbReference type="PDBsum" id="3MLK"/>
<dbReference type="PDBsum" id="3MLL"/>
<dbReference type="PDBsum" id="3PHM"/>
<dbReference type="PDBsum" id="4E4Z"/>
<dbReference type="PDBsum" id="5WJA"/>
<dbReference type="PDBsum" id="5WKW"/>
<dbReference type="PDBsum" id="5WM0"/>
<dbReference type="PDBsum" id="6ALA"/>
<dbReference type="PDBsum" id="6ALV"/>
<dbReference type="PDBsum" id="6AMP"/>
<dbReference type="PDBsum" id="6AN3"/>
<dbReference type="PDBsum" id="6AO6"/>
<dbReference type="PDBsum" id="6AY0"/>
<dbReference type="PDBsum" id="6NCK"/>
<dbReference type="PDBsum" id="8DSJ"/>
<dbReference type="PDBsum" id="8DSL"/>
<dbReference type="PDBsum" id="8DSN"/>
<dbReference type="SMR" id="P14925"/>
<dbReference type="BioGRID" id="247540">
    <property type="interactions" value="3"/>
</dbReference>
<dbReference type="FunCoup" id="P14925">
    <property type="interactions" value="853"/>
</dbReference>
<dbReference type="IntAct" id="P14925">
    <property type="interactions" value="3"/>
</dbReference>
<dbReference type="STRING" id="10116.ENSRNOP00000046774"/>
<dbReference type="BindingDB" id="P14925"/>
<dbReference type="ChEMBL" id="CHEMBL4963"/>
<dbReference type="GlyCosmos" id="P14925">
    <property type="glycosylation" value="1 site, No reported glycans"/>
</dbReference>
<dbReference type="GlyGen" id="P14925">
    <property type="glycosylation" value="2 sites"/>
</dbReference>
<dbReference type="iPTMnet" id="P14925"/>
<dbReference type="PhosphoSitePlus" id="P14925"/>
<dbReference type="jPOST" id="P14925"/>
<dbReference type="PaxDb" id="10116-ENSRNOP00000046774"/>
<dbReference type="Ensembl" id="ENSRNOT00000041418.4">
    <molecule id="P14925-6"/>
    <property type="protein sequence ID" value="ENSRNOP00000050784.3"/>
    <property type="gene ID" value="ENSRNOG00000033280.7"/>
</dbReference>
<dbReference type="Ensembl" id="ENSRNOT00000056457.6">
    <molecule id="P14925-5"/>
    <property type="protein sequence ID" value="ENSRNOP00000053295.2"/>
    <property type="gene ID" value="ENSRNOG00000033280.7"/>
</dbReference>
<dbReference type="Ensembl" id="ENSRNOT00000117663.1">
    <molecule id="P14925-4"/>
    <property type="protein sequence ID" value="ENSRNOP00000089015.1"/>
    <property type="gene ID" value="ENSRNOG00000033280.7"/>
</dbReference>
<dbReference type="Ensembl" id="ENSRNOT00000118414.1">
    <molecule id="P14925-3"/>
    <property type="protein sequence ID" value="ENSRNOP00000087123.1"/>
    <property type="gene ID" value="ENSRNOG00000033280.7"/>
</dbReference>
<dbReference type="GeneID" id="25508"/>
<dbReference type="KEGG" id="rno:25508"/>
<dbReference type="AGR" id="RGD:3252"/>
<dbReference type="CTD" id="5066"/>
<dbReference type="RGD" id="3252">
    <property type="gene designation" value="Pam"/>
</dbReference>
<dbReference type="VEuPathDB" id="HostDB:ENSRNOG00000033280"/>
<dbReference type="eggNOG" id="KOG3567">
    <property type="taxonomic scope" value="Eukaryota"/>
</dbReference>
<dbReference type="GeneTree" id="ENSGT00940000156369"/>
<dbReference type="HOGENOM" id="CLU_891273_0_0_1"/>
<dbReference type="InParanoid" id="P14925"/>
<dbReference type="PhylomeDB" id="P14925"/>
<dbReference type="BRENDA" id="1.14.17.3">
    <property type="organism ID" value="5301"/>
</dbReference>
<dbReference type="BRENDA" id="4.3.2.5">
    <property type="organism ID" value="5301"/>
</dbReference>
<dbReference type="SABIO-RK" id="P14925"/>
<dbReference type="EvolutionaryTrace" id="P14925"/>
<dbReference type="PRO" id="PR:P14925"/>
<dbReference type="Proteomes" id="UP000002494">
    <property type="component" value="Chromosome 9"/>
</dbReference>
<dbReference type="Bgee" id="ENSRNOG00000033280">
    <property type="expression patterns" value="Expressed in heart and 19 other cell types or tissues"/>
</dbReference>
<dbReference type="GO" id="GO:0009986">
    <property type="term" value="C:cell surface"/>
    <property type="evidence" value="ECO:0000314"/>
    <property type="project" value="RGD"/>
</dbReference>
<dbReference type="GO" id="GO:0000785">
    <property type="term" value="C:chromatin"/>
    <property type="evidence" value="ECO:0000266"/>
    <property type="project" value="RGD"/>
</dbReference>
<dbReference type="GO" id="GO:0000793">
    <property type="term" value="C:condensed chromosome"/>
    <property type="evidence" value="ECO:0000266"/>
    <property type="project" value="RGD"/>
</dbReference>
<dbReference type="GO" id="GO:0005576">
    <property type="term" value="C:extracellular region"/>
    <property type="evidence" value="ECO:0000318"/>
    <property type="project" value="GO_Central"/>
</dbReference>
<dbReference type="GO" id="GO:0005615">
    <property type="term" value="C:extracellular space"/>
    <property type="evidence" value="ECO:0000314"/>
    <property type="project" value="RGD"/>
</dbReference>
<dbReference type="GO" id="GO:0043025">
    <property type="term" value="C:neuronal cell body"/>
    <property type="evidence" value="ECO:0000314"/>
    <property type="project" value="RGD"/>
</dbReference>
<dbReference type="GO" id="GO:0043204">
    <property type="term" value="C:perikaryon"/>
    <property type="evidence" value="ECO:0000314"/>
    <property type="project" value="RGD"/>
</dbReference>
<dbReference type="GO" id="GO:0048471">
    <property type="term" value="C:perinuclear region of cytoplasm"/>
    <property type="evidence" value="ECO:0000314"/>
    <property type="project" value="RGD"/>
</dbReference>
<dbReference type="GO" id="GO:0030141">
    <property type="term" value="C:secretory granule"/>
    <property type="evidence" value="ECO:0000314"/>
    <property type="project" value="RGD"/>
</dbReference>
<dbReference type="GO" id="GO:0005802">
    <property type="term" value="C:trans-Golgi network"/>
    <property type="evidence" value="ECO:0000314"/>
    <property type="project" value="RGD"/>
</dbReference>
<dbReference type="GO" id="GO:0030658">
    <property type="term" value="C:transport vesicle membrane"/>
    <property type="evidence" value="ECO:0007669"/>
    <property type="project" value="UniProtKB-SubCell"/>
</dbReference>
<dbReference type="GO" id="GO:0005509">
    <property type="term" value="F:calcium ion binding"/>
    <property type="evidence" value="ECO:0000314"/>
    <property type="project" value="RGD"/>
</dbReference>
<dbReference type="GO" id="GO:0003682">
    <property type="term" value="F:chromatin binding"/>
    <property type="evidence" value="ECO:0000266"/>
    <property type="project" value="RGD"/>
</dbReference>
<dbReference type="GO" id="GO:0005507">
    <property type="term" value="F:copper ion binding"/>
    <property type="evidence" value="ECO:0000314"/>
    <property type="project" value="UniProtKB"/>
</dbReference>
<dbReference type="GO" id="GO:0042802">
    <property type="term" value="F:identical protein binding"/>
    <property type="evidence" value="ECO:0000353"/>
    <property type="project" value="RGD"/>
</dbReference>
<dbReference type="GO" id="GO:0031418">
    <property type="term" value="F:L-ascorbic acid binding"/>
    <property type="evidence" value="ECO:0007669"/>
    <property type="project" value="UniProtKB-KW"/>
</dbReference>
<dbReference type="GO" id="GO:0004598">
    <property type="term" value="F:peptidylamidoglycolate lyase activity"/>
    <property type="evidence" value="ECO:0000314"/>
    <property type="project" value="UniProtKB"/>
</dbReference>
<dbReference type="GO" id="GO:0004504">
    <property type="term" value="F:peptidylglycine monooxygenase activity"/>
    <property type="evidence" value="ECO:0000314"/>
    <property type="project" value="UniProtKB"/>
</dbReference>
<dbReference type="GO" id="GO:0019901">
    <property type="term" value="F:protein kinase binding"/>
    <property type="evidence" value="ECO:0000353"/>
    <property type="project" value="RGD"/>
</dbReference>
<dbReference type="GO" id="GO:0008270">
    <property type="term" value="F:zinc ion binding"/>
    <property type="evidence" value="ECO:0000314"/>
    <property type="project" value="RGD"/>
</dbReference>
<dbReference type="GO" id="GO:0062112">
    <property type="term" value="P:fatty acid primary amide biosynthetic process"/>
    <property type="evidence" value="ECO:0000314"/>
    <property type="project" value="UniProtKB"/>
</dbReference>
<dbReference type="GO" id="GO:0007507">
    <property type="term" value="P:heart development"/>
    <property type="evidence" value="ECO:0000270"/>
    <property type="project" value="RGD"/>
</dbReference>
<dbReference type="GO" id="GO:0007595">
    <property type="term" value="P:lactation"/>
    <property type="evidence" value="ECO:0000270"/>
    <property type="project" value="RGD"/>
</dbReference>
<dbReference type="GO" id="GO:0060173">
    <property type="term" value="P:limb development"/>
    <property type="evidence" value="ECO:0000270"/>
    <property type="project" value="RGD"/>
</dbReference>
<dbReference type="GO" id="GO:0001676">
    <property type="term" value="P:long-chain fatty acid metabolic process"/>
    <property type="evidence" value="ECO:0000314"/>
    <property type="project" value="RGD"/>
</dbReference>
<dbReference type="GO" id="GO:0060135">
    <property type="term" value="P:maternal process involved in female pregnancy"/>
    <property type="evidence" value="ECO:0000270"/>
    <property type="project" value="RGD"/>
</dbReference>
<dbReference type="GO" id="GO:0007076">
    <property type="term" value="P:mitotic chromosome condensation"/>
    <property type="evidence" value="ECO:0000266"/>
    <property type="project" value="RGD"/>
</dbReference>
<dbReference type="GO" id="GO:0022602">
    <property type="term" value="P:ovulation cycle process"/>
    <property type="evidence" value="ECO:0000270"/>
    <property type="project" value="RGD"/>
</dbReference>
<dbReference type="GO" id="GO:0001519">
    <property type="term" value="P:peptide amidation"/>
    <property type="evidence" value="ECO:0000314"/>
    <property type="project" value="UniProtKB"/>
</dbReference>
<dbReference type="GO" id="GO:0006518">
    <property type="term" value="P:peptide metabolic process"/>
    <property type="evidence" value="ECO:0000314"/>
    <property type="project" value="RGD"/>
</dbReference>
<dbReference type="GO" id="GO:0032956">
    <property type="term" value="P:regulation of actin cytoskeleton organization"/>
    <property type="evidence" value="ECO:0000315"/>
    <property type="project" value="RGD"/>
</dbReference>
<dbReference type="GO" id="GO:0006357">
    <property type="term" value="P:regulation of transcription by RNA polymerase II"/>
    <property type="evidence" value="ECO:0000315"/>
    <property type="project" value="RGD"/>
</dbReference>
<dbReference type="GO" id="GO:0046688">
    <property type="term" value="P:response to copper ion"/>
    <property type="evidence" value="ECO:0000270"/>
    <property type="project" value="RGD"/>
</dbReference>
<dbReference type="GO" id="GO:0032355">
    <property type="term" value="P:response to estradiol"/>
    <property type="evidence" value="ECO:0000270"/>
    <property type="project" value="RGD"/>
</dbReference>
<dbReference type="GO" id="GO:0051384">
    <property type="term" value="P:response to glucocorticoid"/>
    <property type="evidence" value="ECO:0000270"/>
    <property type="project" value="RGD"/>
</dbReference>
<dbReference type="GO" id="GO:0001666">
    <property type="term" value="P:response to hypoxia"/>
    <property type="evidence" value="ECO:0000270"/>
    <property type="project" value="RGD"/>
</dbReference>
<dbReference type="GO" id="GO:0009268">
    <property type="term" value="P:response to pH"/>
    <property type="evidence" value="ECO:0000314"/>
    <property type="project" value="RGD"/>
</dbReference>
<dbReference type="GO" id="GO:0009410">
    <property type="term" value="P:response to xenobiotic stimulus"/>
    <property type="evidence" value="ECO:0000314"/>
    <property type="project" value="RGD"/>
</dbReference>
<dbReference type="GO" id="GO:0010043">
    <property type="term" value="P:response to zinc ion"/>
    <property type="evidence" value="ECO:0000266"/>
    <property type="project" value="RGD"/>
</dbReference>
<dbReference type="GO" id="GO:0009404">
    <property type="term" value="P:toxin metabolic process"/>
    <property type="evidence" value="ECO:0000314"/>
    <property type="project" value="RGD"/>
</dbReference>
<dbReference type="CDD" id="cd14958">
    <property type="entry name" value="NHL_PAL_like"/>
    <property type="match status" value="1"/>
</dbReference>
<dbReference type="FunFam" id="2.60.120.230:FF:000002">
    <property type="entry name" value="Peptidyl-glycine alpha-amidating monooxygenase B"/>
    <property type="match status" value="1"/>
</dbReference>
<dbReference type="FunFam" id="2.120.10.30:FF:000016">
    <property type="entry name" value="peptidyl-glycine alpha-amidating monooxygenase isoform X1"/>
    <property type="match status" value="1"/>
</dbReference>
<dbReference type="FunFam" id="2.60.120.310:FF:000001">
    <property type="entry name" value="peptidyl-glycine alpha-amidating monooxygenase isoform X1"/>
    <property type="match status" value="1"/>
</dbReference>
<dbReference type="Gene3D" id="2.60.120.230">
    <property type="match status" value="1"/>
</dbReference>
<dbReference type="Gene3D" id="2.60.120.310">
    <property type="entry name" value="Copper type II, ascorbate-dependent monooxygenase, N-terminal domain"/>
    <property type="match status" value="1"/>
</dbReference>
<dbReference type="Gene3D" id="2.120.10.30">
    <property type="entry name" value="TolB, C-terminal domain"/>
    <property type="match status" value="1"/>
</dbReference>
<dbReference type="InterPro" id="IPR011042">
    <property type="entry name" value="6-blade_b-propeller_TolB-like"/>
</dbReference>
<dbReference type="InterPro" id="IPR014784">
    <property type="entry name" value="Cu2_ascorb_mOase-like_C"/>
</dbReference>
<dbReference type="InterPro" id="IPR020611">
    <property type="entry name" value="Cu2_ascorb_mOase_CS-1"/>
</dbReference>
<dbReference type="InterPro" id="IPR014783">
    <property type="entry name" value="Cu2_ascorb_mOase_CS-2"/>
</dbReference>
<dbReference type="InterPro" id="IPR000323">
    <property type="entry name" value="Cu2_ascorb_mOase_N"/>
</dbReference>
<dbReference type="InterPro" id="IPR036939">
    <property type="entry name" value="Cu2_ascorb_mOase_N_sf"/>
</dbReference>
<dbReference type="InterPro" id="IPR024548">
    <property type="entry name" value="Cu2_monoox_C"/>
</dbReference>
<dbReference type="InterPro" id="IPR001258">
    <property type="entry name" value="NHL_repeat"/>
</dbReference>
<dbReference type="InterPro" id="IPR000720">
    <property type="entry name" value="PHM/PAL"/>
</dbReference>
<dbReference type="InterPro" id="IPR008977">
    <property type="entry name" value="PHM/PNGase_F_dom_sf"/>
</dbReference>
<dbReference type="PANTHER" id="PTHR10680">
    <property type="entry name" value="PEPTIDYL-GLYCINE ALPHA-AMIDATING MONOOXYGENASE"/>
    <property type="match status" value="1"/>
</dbReference>
<dbReference type="PANTHER" id="PTHR10680:SF14">
    <property type="entry name" value="PEPTIDYL-GLYCINE ALPHA-AMIDATING MONOOXYGENASE"/>
    <property type="match status" value="1"/>
</dbReference>
<dbReference type="Pfam" id="PF03712">
    <property type="entry name" value="Cu2_monoox_C"/>
    <property type="match status" value="1"/>
</dbReference>
<dbReference type="Pfam" id="PF01082">
    <property type="entry name" value="Cu2_monooxygen"/>
    <property type="match status" value="1"/>
</dbReference>
<dbReference type="Pfam" id="PF01436">
    <property type="entry name" value="NHL"/>
    <property type="match status" value="3"/>
</dbReference>
<dbReference type="PRINTS" id="PR00790">
    <property type="entry name" value="PAMONOXGNASE"/>
</dbReference>
<dbReference type="SUPFAM" id="SSF63829">
    <property type="entry name" value="Calcium-dependent phosphotriesterase"/>
    <property type="match status" value="1"/>
</dbReference>
<dbReference type="SUPFAM" id="SSF49742">
    <property type="entry name" value="PHM/PNGase F"/>
    <property type="match status" value="2"/>
</dbReference>
<dbReference type="PROSITE" id="PS00084">
    <property type="entry name" value="CU2_MONOOXYGENASE_1"/>
    <property type="match status" value="1"/>
</dbReference>
<dbReference type="PROSITE" id="PS00085">
    <property type="entry name" value="CU2_MONOOXYGENASE_2"/>
    <property type="match status" value="1"/>
</dbReference>
<dbReference type="PROSITE" id="PS51125">
    <property type="entry name" value="NHL"/>
    <property type="match status" value="5"/>
</dbReference>
<keyword id="KW-0002">3D-structure</keyword>
<keyword id="KW-0025">Alternative splicing</keyword>
<keyword id="KW-0106">Calcium</keyword>
<keyword id="KW-0165">Cleavage on pair of basic residues</keyword>
<keyword id="KW-0186">Copper</keyword>
<keyword id="KW-0968">Cytoplasmic vesicle</keyword>
<keyword id="KW-0903">Direct protein sequencing</keyword>
<keyword id="KW-1015">Disulfide bond</keyword>
<keyword id="KW-0325">Glycoprotein</keyword>
<keyword id="KW-0443">Lipid metabolism</keyword>
<keyword id="KW-0456">Lyase</keyword>
<keyword id="KW-0472">Membrane</keyword>
<keyword id="KW-0479">Metal-binding</keyword>
<keyword id="KW-0503">Monooxygenase</keyword>
<keyword id="KW-0511">Multifunctional enzyme</keyword>
<keyword id="KW-0560">Oxidoreductase</keyword>
<keyword id="KW-0597">Phosphoprotein</keyword>
<keyword id="KW-1185">Reference proteome</keyword>
<keyword id="KW-0677">Repeat</keyword>
<keyword id="KW-0964">Secreted</keyword>
<keyword id="KW-0732">Signal</keyword>
<keyword id="KW-0765">Sulfation</keyword>
<keyword id="KW-0812">Transmembrane</keyword>
<keyword id="KW-1133">Transmembrane helix</keyword>
<keyword id="KW-0847">Vitamin C</keyword>
<keyword id="KW-0862">Zinc</keyword>
<accession>P14925</accession>
<accession>P70710</accession>
<accession>Q64616</accession>
<accession>Q64668</accession>
<sequence length="976" mass="108675">MAGRARSGLLLLLLGLLALQSSCLAFRSPLSVFKRFKETTRSFSNECLGTIGPVTPLDASDFALDIRMPGVTPKESDTYFCMSMRLPVDEEAFVIDFKPRASMDTVHHMLLFGCNMPSSTGSYWFCDEGTCTDKANILYAWARNAPPTRLPKGVGFRVGGETGSKYFVLQVHYGDISAFRDNHKDCSGVSVHLTRVPQPLIAGMYLMMSVDTVIPPGEKVVNADISCQYKMYPMHVFAYRVHTHHLGKVVSGYRVRNGQWTLIGRQNPQLPQAFYPVEHPVDVTFGDILAARCVFTGEGRTEATHIGGTSSDEMCNLYIMYYMEAKYALSFMTCTKNVAPDMFRTIPAEANIPIPVKPDMVMMHGHHKEAENKEKSALMQQPKQGEEEVLEQGDFYSLLSKLLGEREDVHVHKYNPTEKTESGSDLVAEIANVVQKKDLGRSDAREGAEHEEWGNAILVRDRIHRFHQLESTLRPAESRAFSFQQPGEGPWEPEPSGDFHVEEELDWPGVYLLPGQVSGVALDSKNNLVIFHRGDHVWDGNSFDSKFVYQQRGLGPIEEDTILVIDPNNAEILQSSGKNLFYLPHGLSIDTDGNYWVTDVALHQVFKLDPHSKEGPLLILGRSMQPGSDQNHFCQPTDVAVEPSTGAVFVSDGYCNSRIVQFSPSGKFVTQWGEESSGSSPRPGQFSVPHSLALVPHLDQLCVADRENGRIQCFKTDTKEFVREIKHASFGRNVFAISYIPGFLFAVNGKPYFGDQEPVQGFVMNFSSGEIIDVFKPVRKHFDMPHDIVASEDGTVYIGDAHTNTVWKFTLTEKMEHRSVKKAGIEVQEIKEAEAVVEPKVENKPTSSELQKMQEKQKLSTEPGSGVSVVLITTLLVIPVLVLLAIVMFIRWKKSRAFGDHDRKLESSSGRVLGRFRGKGSGGLNLGNFFASRKGYSRKGFDRVSTEGSDQEKDEDDGTESEEEYSAPLPKPAPSS</sequence>
<feature type="signal peptide" evidence="12">
    <location>
        <begin position="1"/>
        <end position="25"/>
    </location>
</feature>
<feature type="propeptide" id="PRO_0000006365">
    <location>
        <begin position="26"/>
        <end position="35"/>
    </location>
</feature>
<feature type="chain" id="PRO_0000006366" description="Peptidylglycine alpha-amidating monooxygenase">
    <location>
        <begin position="36"/>
        <end position="976"/>
    </location>
</feature>
<feature type="topological domain" description="Intragranular" evidence="3">
    <location>
        <begin position="36"/>
        <end position="866"/>
    </location>
</feature>
<feature type="transmembrane region" description="Helical" evidence="3">
    <location>
        <begin position="867"/>
        <end position="890"/>
    </location>
</feature>
<feature type="topological domain" description="Cytoplasmic" evidence="3">
    <location>
        <begin position="891"/>
        <end position="976"/>
    </location>
</feature>
<feature type="repeat" description="NHL 1">
    <location>
        <begin position="501"/>
        <end position="544"/>
    </location>
</feature>
<feature type="repeat" description="NHL 2">
    <location>
        <begin position="570"/>
        <end position="611"/>
    </location>
</feature>
<feature type="repeat" description="NHL 3">
    <location>
        <begin position="620"/>
        <end position="665"/>
    </location>
</feature>
<feature type="repeat" description="NHL 4">
    <location>
        <begin position="673"/>
        <end position="717"/>
    </location>
</feature>
<feature type="repeat" description="NHL 5">
    <location>
        <begin position="769"/>
        <end position="812"/>
    </location>
</feature>
<feature type="region of interest" description="Peptidylglycine alpha-hydroxylating monooxygenase" evidence="6">
    <location>
        <begin position="1"/>
        <end position="497"/>
    </location>
</feature>
<feature type="region of interest" description="Peptidyl-alpha-hydroxyglycine alpha-amidating lyase" evidence="10">
    <location>
        <begin position="498"/>
        <end position="820"/>
    </location>
</feature>
<feature type="region of interest" description="Interaction with RASSF9" evidence="17">
    <location>
        <begin position="928"/>
        <end position="945"/>
    </location>
</feature>
<feature type="region of interest" description="Disordered" evidence="4">
    <location>
        <begin position="940"/>
        <end position="976"/>
    </location>
</feature>
<feature type="compositionally biased region" description="Acidic residues" evidence="4">
    <location>
        <begin position="952"/>
        <end position="965"/>
    </location>
</feature>
<feature type="binding site" evidence="6 8 9 11 13 15 24 25 27 32 42 43 53">
    <location>
        <position position="107"/>
    </location>
    <ligand>
        <name>Cu(2+)</name>
        <dbReference type="ChEBI" id="CHEBI:29036"/>
        <label>1</label>
        <note>catalytic</note>
    </ligand>
</feature>
<feature type="binding site" evidence="6 8 9 11 13 15 24 25 27 32 42 43 53">
    <location>
        <position position="108"/>
    </location>
    <ligand>
        <name>Cu(2+)</name>
        <dbReference type="ChEBI" id="CHEBI:29036"/>
        <label>1</label>
        <note>catalytic</note>
    </ligand>
</feature>
<feature type="binding site" evidence="6 8 9 11 13 15 24 25 27 32 42 43 53">
    <location>
        <position position="172"/>
    </location>
    <ligand>
        <name>Cu(2+)</name>
        <dbReference type="ChEBI" id="CHEBI:29036"/>
        <label>1</label>
        <note>catalytic</note>
    </ligand>
</feature>
<feature type="binding site" evidence="6 8 9 11 13 14 15 24 25 27 32 42 43 48 53">
    <location>
        <position position="242"/>
    </location>
    <ligand>
        <name>Cu(2+)</name>
        <dbReference type="ChEBI" id="CHEBI:29036"/>
        <label>2</label>
        <note>catalytic</note>
    </ligand>
</feature>
<feature type="binding site" evidence="6 8 9 11 13 14 15 24 25 27 32 42 43 48 53">
    <location>
        <position position="244"/>
    </location>
    <ligand>
        <name>Cu(2+)</name>
        <dbReference type="ChEBI" id="CHEBI:29036"/>
        <label>2</label>
        <note>catalytic</note>
    </ligand>
</feature>
<feature type="binding site" evidence="6 8 11 13 14 15 24 25 32 42 43 48 53">
    <location>
        <position position="314"/>
    </location>
    <ligand>
        <name>Cu(2+)</name>
        <dbReference type="ChEBI" id="CHEBI:29036"/>
        <label>2</label>
        <note>catalytic</note>
    </ligand>
</feature>
<feature type="binding site" evidence="10 30 31">
    <location>
        <position position="520"/>
    </location>
    <ligand>
        <name>Ca(2+)</name>
        <dbReference type="ChEBI" id="CHEBI:29108"/>
        <note>structural</note>
    </ligand>
</feature>
<feature type="binding site" evidence="21 31">
    <location>
        <position position="533"/>
    </location>
    <ligand>
        <name>a protein</name>
        <dbReference type="ChEBI" id="CHEBI:16541"/>
    </ligand>
    <ligandPart>
        <name>C-terminal Xaa-(2S)-2-hydroxyglycine residue</name>
        <dbReference type="ChEBI" id="CHEBI:142768"/>
    </ligandPart>
</feature>
<feature type="binding site" evidence="10 30">
    <location>
        <position position="585"/>
    </location>
    <ligand>
        <name>Zn(2+)</name>
        <dbReference type="ChEBI" id="CHEBI:29105"/>
        <note>catalytic</note>
    </ligand>
</feature>
<feature type="binding site" evidence="10 30 31">
    <location>
        <position position="587"/>
    </location>
    <ligand>
        <name>Ca(2+)</name>
        <dbReference type="ChEBI" id="CHEBI:29108"/>
        <note>structural</note>
    </ligand>
</feature>
<feature type="binding site" evidence="21 31">
    <location>
        <position position="654"/>
    </location>
    <ligand>
        <name>a protein</name>
        <dbReference type="ChEBI" id="CHEBI:16541"/>
    </ligand>
    <ligandPart>
        <name>C-terminal Xaa-(2S)-2-hydroxyglycine residue</name>
        <dbReference type="ChEBI" id="CHEBI:142768"/>
    </ligandPart>
</feature>
<feature type="binding site" evidence="10 30">
    <location>
        <position position="690"/>
    </location>
    <ligand>
        <name>Zn(2+)</name>
        <dbReference type="ChEBI" id="CHEBI:29105"/>
        <note>catalytic</note>
    </ligand>
</feature>
<feature type="binding site" evidence="21 31">
    <location>
        <position position="706"/>
    </location>
    <ligand>
        <name>a protein</name>
        <dbReference type="ChEBI" id="CHEBI:16541"/>
    </ligand>
    <ligandPart>
        <name>C-terminal Xaa-(2S)-2-hydroxyglycine residue</name>
        <dbReference type="ChEBI" id="CHEBI:142768"/>
    </ligandPart>
</feature>
<feature type="binding site" evidence="10 30">
    <location>
        <position position="786"/>
    </location>
    <ligand>
        <name>Zn(2+)</name>
        <dbReference type="ChEBI" id="CHEBI:29105"/>
        <note>catalytic</note>
    </ligand>
</feature>
<feature type="binding site" evidence="10 30 31">
    <location>
        <position position="787"/>
    </location>
    <ligand>
        <name>Ca(2+)</name>
        <dbReference type="ChEBI" id="CHEBI:29108"/>
        <note>structural</note>
    </ligand>
</feature>
<feature type="modified residue" description="Phosphoserine" evidence="2">
    <location>
        <position position="921"/>
    </location>
</feature>
<feature type="modified residue" description="Phosphoserine" evidence="2">
    <location>
        <position position="932"/>
    </location>
</feature>
<feature type="modified residue" description="Phosphoserine" evidence="56">
    <location>
        <position position="945"/>
    </location>
</feature>
<feature type="modified residue" description="Phosphothreonine" evidence="2">
    <location>
        <position position="946"/>
    </location>
</feature>
<feature type="modified residue" description="Phosphoserine" evidence="56">
    <location>
        <position position="949"/>
    </location>
</feature>
<feature type="modified residue" description="Phosphothreonine" evidence="56">
    <location>
        <position position="959"/>
    </location>
</feature>
<feature type="modified residue" description="Phosphoserine" evidence="56">
    <location>
        <position position="961"/>
    </location>
</feature>
<feature type="glycosylation site" description="N-linked (GlcNAc...) asparagine" evidence="12">
    <location>
        <position position="765"/>
    </location>
</feature>
<feature type="disulfide bond" evidence="7 8 9 11 13 14 15 25 27 43 53">
    <location>
        <begin position="47"/>
        <end position="186"/>
    </location>
</feature>
<feature type="disulfide bond" evidence="7 8 9 11 13 14 15 25 27 43 53">
    <location>
        <begin position="81"/>
        <end position="126"/>
    </location>
</feature>
<feature type="disulfide bond" evidence="7 8 9 11 13 14 15 25 27 43 53">
    <location>
        <begin position="114"/>
        <end position="131"/>
    </location>
</feature>
<feature type="disulfide bond" evidence="7 8 9 11 13 14 15 25 27 43 53">
    <location>
        <begin position="227"/>
        <end position="334"/>
    </location>
</feature>
<feature type="disulfide bond" evidence="7 8 9 11 13 14 15 25 27 43 53">
    <location>
        <begin position="293"/>
        <end position="315"/>
    </location>
</feature>
<feature type="disulfide bond" evidence="7">
    <location>
        <begin position="634"/>
        <end position="655"/>
    </location>
</feature>
<feature type="disulfide bond" evidence="7">
    <location>
        <begin position="702"/>
        <end position="713"/>
    </location>
</feature>
<feature type="splice variant" id="VSP_001230" description="In isoform PAM-5." evidence="20">
    <original>GTSSD</original>
    <variation>FKDTF</variation>
    <location>
        <begin position="308"/>
        <end position="312"/>
    </location>
</feature>
<feature type="splice variant" id="VSP_001231" description="In isoform PAM-5." evidence="20">
    <location>
        <begin position="313"/>
        <end position="976"/>
    </location>
</feature>
<feature type="splice variant" id="VSP_001232" description="In isoform PAM-2, isoform PAM-3, isoform PAM-3A and isoform PAM-3B." evidence="20">
    <location>
        <begin position="393"/>
        <end position="497"/>
    </location>
</feature>
<feature type="splice variant" id="VSP_001236" description="In isoform PAM-4." evidence="20">
    <original>DFHVEEELDWPGVYLLPGQV</original>
    <variation>GASRISFTQKKKCVKHCNPH</variation>
    <location>
        <begin position="498"/>
        <end position="517"/>
    </location>
</feature>
<feature type="splice variant" id="VSP_001237" description="In isoform PAM-4." evidence="20">
    <location>
        <begin position="518"/>
        <end position="917"/>
    </location>
</feature>
<feature type="splice variant" id="VSP_001234" description="In isoform PAM-3." evidence="20">
    <location>
        <begin position="832"/>
        <end position="917"/>
    </location>
</feature>
<feature type="splice variant" id="VSP_001233" description="In isoform PAM-3A." evidence="20">
    <location>
        <begin position="832"/>
        <end position="899"/>
    </location>
</feature>
<feature type="splice variant" id="VSP_001235" description="In isoform PAM-3B." evidence="20">
    <location>
        <begin position="900"/>
        <end position="917"/>
    </location>
</feature>
<feature type="mutagenesis site" description="Impaired Cu(2+)-binding." evidence="14">
    <original>H</original>
    <variation>A</variation>
    <location>
        <position position="107"/>
    </location>
</feature>
<feature type="mutagenesis site" description="Impaired Cu(2+)-binding; forms a closed conformer in the presence of citrate with a reduced Cu(2+)-Cu(2+) site separation of 4 Angstroms. Abolished peptidylglycine alpha-hydroxylating monooxygenase activity." evidence="14 16">
    <original>H</original>
    <variation>A</variation>
    <location>
        <position position="108"/>
    </location>
</feature>
<feature type="mutagenesis site" description="Impaired Cu(2+)-binding." evidence="14">
    <original>H</original>
    <variation>A</variation>
    <location>
        <position position="172"/>
    </location>
</feature>
<feature type="mutagenesis site" description="Abolished peptidylglycine alpha-hydroxylating monooxygenase activity." evidence="16">
    <original>H</original>
    <variation>A</variation>
    <location>
        <position position="244"/>
    </location>
</feature>
<feature type="mutagenesis site" description="Induces a fully open peptidylglycine monooxygenase structure with Cu(2+) distances of 14 Angstroms." evidence="15">
    <original>Q</original>
    <variation>E</variation>
    <variation>A</variation>
    <location>
        <position position="272"/>
    </location>
</feature>
<feature type="mutagenesis site" description="Abolished peptidylglycine alpha-hydroxylating monooxygenase activity." evidence="16">
    <original>M</original>
    <variation>I</variation>
    <location>
        <position position="314"/>
    </location>
</feature>
<feature type="mutagenesis site" description="Abolishes peptidyl-alpha-hydroxyglycine alpha-amidating lyase activity." evidence="10">
    <original>R</original>
    <variation>A</variation>
    <location>
        <position position="533"/>
    </location>
</feature>
<feature type="mutagenesis site" description="Abolishes peptidyl-alpha-hydroxyglycine alpha-amidating lyase activity." evidence="10">
    <original>R</original>
    <variation>Q</variation>
    <location>
        <position position="533"/>
    </location>
</feature>
<feature type="mutagenesis site" description="Abolishes peptidyl-alpha-hydroxyglycine alpha-amidating lyase activity." evidence="10">
    <original>R</original>
    <variation>A</variation>
    <location>
        <position position="706"/>
    </location>
</feature>
<feature type="mutagenesis site" description="Reduces peptidyl-alpha-hydroxyglycine alpha-amidating lyase activity." evidence="10">
    <original>R</original>
    <variation>Q</variation>
    <location>
        <position position="706"/>
    </location>
</feature>
<feature type="mutagenesis site" description="Abolishes peptidyl-alpha-hydroxyglycine alpha-amidating lyase activity." evidence="10">
    <original>M</original>
    <variation>A</variation>
    <location>
        <position position="784"/>
    </location>
</feature>
<feature type="mutagenesis site" description="Abolishes peptidyl-alpha-hydroxyglycine alpha-amidating lyase activity." evidence="10">
    <original>M</original>
    <variation>Q</variation>
    <location>
        <position position="784"/>
    </location>
</feature>
<feature type="mutagenesis site" description="Reduces peptidyl-alpha-hydroxyglycine alpha-amidating lyase activity." evidence="10">
    <original>D</original>
    <variation>A</variation>
    <location>
        <position position="787"/>
    </location>
</feature>
<feature type="sequence conflict" description="In Ref. 4; no nucleotide entry." evidence="20" ref="4">
    <original>T</original>
    <variation>S</variation>
    <location>
        <position position="959"/>
    </location>
</feature>
<feature type="helix" evidence="57">
    <location>
        <begin position="49"/>
        <end position="51"/>
    </location>
</feature>
<feature type="strand" evidence="59">
    <location>
        <begin position="53"/>
        <end position="56"/>
    </location>
</feature>
<feature type="strand" evidence="59">
    <location>
        <begin position="58"/>
        <end position="67"/>
    </location>
</feature>
<feature type="strand" evidence="59">
    <location>
        <begin position="69"/>
        <end position="71"/>
    </location>
</feature>
<feature type="strand" evidence="59">
    <location>
        <begin position="75"/>
        <end position="85"/>
    </location>
</feature>
<feature type="strand" evidence="62">
    <location>
        <begin position="87"/>
        <end position="90"/>
    </location>
</feature>
<feature type="strand" evidence="59">
    <location>
        <begin position="92"/>
        <end position="100"/>
    </location>
</feature>
<feature type="turn" evidence="59">
    <location>
        <begin position="103"/>
        <end position="105"/>
    </location>
</feature>
<feature type="strand" evidence="59">
    <location>
        <begin position="106"/>
        <end position="118"/>
    </location>
</feature>
<feature type="strand" evidence="59">
    <location>
        <begin position="121"/>
        <end position="125"/>
    </location>
</feature>
<feature type="helix" evidence="59">
    <location>
        <begin position="126"/>
        <end position="128"/>
    </location>
</feature>
<feature type="strand" evidence="59">
    <location>
        <begin position="130"/>
        <end position="133"/>
    </location>
</feature>
<feature type="strand" evidence="59">
    <location>
        <begin position="136"/>
        <end position="142"/>
    </location>
</feature>
<feature type="strand" evidence="59">
    <location>
        <begin position="154"/>
        <end position="159"/>
    </location>
</feature>
<feature type="turn" evidence="59">
    <location>
        <begin position="160"/>
        <end position="162"/>
    </location>
</feature>
<feature type="strand" evidence="59">
    <location>
        <begin position="166"/>
        <end position="173"/>
    </location>
</feature>
<feature type="helix" evidence="58">
    <location>
        <begin position="178"/>
        <end position="181"/>
    </location>
</feature>
<feature type="strand" evidence="59">
    <location>
        <begin position="188"/>
        <end position="196"/>
    </location>
</feature>
<feature type="strand" evidence="59">
    <location>
        <begin position="199"/>
        <end position="209"/>
    </location>
</feature>
<feature type="strand" evidence="61">
    <location>
        <begin position="211"/>
        <end position="214"/>
    </location>
</feature>
<feature type="strand" evidence="59">
    <location>
        <begin position="219"/>
        <end position="228"/>
    </location>
</feature>
<feature type="strand" evidence="59">
    <location>
        <begin position="234"/>
        <end position="245"/>
    </location>
</feature>
<feature type="strand" evidence="59">
    <location>
        <begin position="247"/>
        <end position="256"/>
    </location>
</feature>
<feature type="strand" evidence="59">
    <location>
        <begin position="259"/>
        <end position="266"/>
    </location>
</feature>
<feature type="strand" evidence="63">
    <location>
        <begin position="268"/>
        <end position="270"/>
    </location>
</feature>
<feature type="strand" evidence="59">
    <location>
        <begin position="275"/>
        <end position="283"/>
    </location>
</feature>
<feature type="strand" evidence="59">
    <location>
        <begin position="288"/>
        <end position="296"/>
    </location>
</feature>
<feature type="strand" evidence="64">
    <location>
        <begin position="297"/>
        <end position="299"/>
    </location>
</feature>
<feature type="strand" evidence="61">
    <location>
        <begin position="304"/>
        <end position="307"/>
    </location>
</feature>
<feature type="strand" evidence="59">
    <location>
        <begin position="315"/>
        <end position="324"/>
    </location>
</feature>
<feature type="helix" evidence="59">
    <location>
        <begin position="325"/>
        <end position="327"/>
    </location>
</feature>
<feature type="strand" evidence="59">
    <location>
        <begin position="330"/>
        <end position="334"/>
    </location>
</feature>
<feature type="strand" evidence="61">
    <location>
        <begin position="336"/>
        <end position="338"/>
    </location>
</feature>
<feature type="helix" evidence="59">
    <location>
        <begin position="340"/>
        <end position="345"/>
    </location>
</feature>
<feature type="helix" evidence="59">
    <location>
        <begin position="348"/>
        <end position="351"/>
    </location>
</feature>
<feature type="strand" evidence="60">
    <location>
        <begin position="498"/>
        <end position="503"/>
    </location>
</feature>
<feature type="helix" evidence="60">
    <location>
        <begin position="508"/>
        <end position="511"/>
    </location>
</feature>
<feature type="strand" evidence="60">
    <location>
        <begin position="517"/>
        <end position="522"/>
    </location>
</feature>
<feature type="strand" evidence="60">
    <location>
        <begin position="528"/>
        <end position="532"/>
    </location>
</feature>
<feature type="helix" evidence="60">
    <location>
        <begin position="552"/>
        <end position="554"/>
    </location>
</feature>
<feature type="strand" evidence="60">
    <location>
        <begin position="562"/>
        <end position="565"/>
    </location>
</feature>
<feature type="turn" evidence="60">
    <location>
        <begin position="567"/>
        <end position="569"/>
    </location>
</feature>
<feature type="strand" evidence="60">
    <location>
        <begin position="572"/>
        <end position="576"/>
    </location>
</feature>
<feature type="turn" evidence="60">
    <location>
        <begin position="578"/>
        <end position="580"/>
    </location>
</feature>
<feature type="strand" evidence="60">
    <location>
        <begin position="582"/>
        <end position="589"/>
    </location>
</feature>
<feature type="strand" evidence="60">
    <location>
        <begin position="595"/>
        <end position="599"/>
    </location>
</feature>
<feature type="turn" evidence="60">
    <location>
        <begin position="600"/>
        <end position="603"/>
    </location>
</feature>
<feature type="strand" evidence="60">
    <location>
        <begin position="604"/>
        <end position="608"/>
    </location>
</feature>
<feature type="strand" evidence="60">
    <location>
        <begin position="617"/>
        <end position="622"/>
    </location>
</feature>
<feature type="strand" evidence="60">
    <location>
        <begin position="634"/>
        <end position="641"/>
    </location>
</feature>
<feature type="turn" evidence="60">
    <location>
        <begin position="643"/>
        <end position="645"/>
    </location>
</feature>
<feature type="strand" evidence="60">
    <location>
        <begin position="648"/>
        <end position="652"/>
    </location>
</feature>
<feature type="strand" evidence="60">
    <location>
        <begin position="658"/>
        <end position="662"/>
    </location>
</feature>
<feature type="strand" evidence="60">
    <location>
        <begin position="668"/>
        <end position="672"/>
    </location>
</feature>
<feature type="strand" evidence="60">
    <location>
        <begin position="678"/>
        <end position="680"/>
    </location>
</feature>
<feature type="strand" evidence="60">
    <location>
        <begin position="685"/>
        <end position="687"/>
    </location>
</feature>
<feature type="strand" evidence="60">
    <location>
        <begin position="689"/>
        <end position="695"/>
    </location>
</feature>
<feature type="turn" evidence="60">
    <location>
        <begin position="696"/>
        <end position="699"/>
    </location>
</feature>
<feature type="strand" evidence="60">
    <location>
        <begin position="700"/>
        <end position="705"/>
    </location>
</feature>
<feature type="turn" evidence="60">
    <location>
        <begin position="706"/>
        <end position="709"/>
    </location>
</feature>
<feature type="strand" evidence="60">
    <location>
        <begin position="710"/>
        <end position="715"/>
    </location>
</feature>
<feature type="turn" evidence="60">
    <location>
        <begin position="716"/>
        <end position="718"/>
    </location>
</feature>
<feature type="strand" evidence="60">
    <location>
        <begin position="721"/>
        <end position="725"/>
    </location>
</feature>
<feature type="turn" evidence="60">
    <location>
        <begin position="728"/>
        <end position="732"/>
    </location>
</feature>
<feature type="strand" evidence="60">
    <location>
        <begin position="734"/>
        <end position="740"/>
    </location>
</feature>
<feature type="strand" evidence="60">
    <location>
        <begin position="743"/>
        <end position="748"/>
    </location>
</feature>
<feature type="strand" evidence="60">
    <location>
        <begin position="761"/>
        <end position="765"/>
    </location>
</feature>
<feature type="turn" evidence="60">
    <location>
        <begin position="766"/>
        <end position="768"/>
    </location>
</feature>
<feature type="strand" evidence="60">
    <location>
        <begin position="771"/>
        <end position="775"/>
    </location>
</feature>
<feature type="strand" evidence="60">
    <location>
        <begin position="778"/>
        <end position="780"/>
    </location>
</feature>
<feature type="strand" evidence="60">
    <location>
        <begin position="783"/>
        <end position="790"/>
    </location>
</feature>
<feature type="strand" evidence="60">
    <location>
        <begin position="794"/>
        <end position="803"/>
    </location>
</feature>
<feature type="strand" evidence="60">
    <location>
        <begin position="806"/>
        <end position="813"/>
    </location>
</feature>
<feature type="modified residue" description="Sulfotyrosine" evidence="20">
    <location sequence="P14925-3">
        <position position="774"/>
    </location>
</feature>
<feature type="modified residue" description="Sulfotyrosine" evidence="20">
    <location sequence="P14925-4">
        <position position="792"/>
    </location>
</feature>
<comment type="function">
    <text evidence="2 5 15 16">Bifunctional enzyme that catalyzes amidation of the C-terminus of proteins (PubMed:10079066, PubMed:36880254, PubMed:7893699). Alpha-amidation is present at the C-terminus of many endocrine hormones and neuropeptides and is required for their activity (By similarity). C-terminal amidation also takes place in response to protein fragmentation triggered by oxidative stress, promoting degradation of amidated protein fragments by the proteasome (By similarity). Alpha-amidation involves two sequential reactions, both of which are catalyzed by separate catalytic domains of the enzyme (PubMed:10079066). The first step, catalyzed by peptidyl alpha-hydroxylating monooxygenase (PHM) domain, is the copper-, ascorbate-, and O2- dependent stereospecific hydroxylation (with S stereochemistry) at the alpha-carbon (C-alpha) of the C-terminal glycine of the peptidylglycine substrate (PubMed:10079066). The second step, catalyzed by the peptidylglycine amidoglycolate lyase (PAL) domain, is the zinc-dependent cleavage of the N-C-alpha bond, producing the alpha-amidated peptide and glyoxylate (PubMed:10079066). Similarly, catalyzes the two-step conversion of an N-fatty acylglycine to a primary fatty acid amide and glyoxylate (PubMed:10079066).</text>
</comment>
<comment type="catalytic activity">
    <reaction evidence="5 15 16">
        <text>a [peptide]-C-terminal glycine + 2 L-ascorbate + O2 = a [peptide]-C-terminal (2S)-2-hydroxyglycine + 2 monodehydro-L-ascorbate radical + H2O</text>
        <dbReference type="Rhea" id="RHEA:21452"/>
        <dbReference type="Rhea" id="RHEA-COMP:13486"/>
        <dbReference type="Rhea" id="RHEA-COMP:15321"/>
        <dbReference type="ChEBI" id="CHEBI:15377"/>
        <dbReference type="ChEBI" id="CHEBI:15379"/>
        <dbReference type="ChEBI" id="CHEBI:38290"/>
        <dbReference type="ChEBI" id="CHEBI:59513"/>
        <dbReference type="ChEBI" id="CHEBI:137000"/>
        <dbReference type="ChEBI" id="CHEBI:142768"/>
        <dbReference type="EC" id="1.14.17.3"/>
    </reaction>
</comment>
<comment type="catalytic activity">
    <reaction evidence="5">
        <text>a [peptide]-C-terminal (2S)-2-hydroxyglycine = a [peptide]-C-terminal amide + glyoxylate</text>
        <dbReference type="Rhea" id="RHEA:20924"/>
        <dbReference type="Rhea" id="RHEA-COMP:13485"/>
        <dbReference type="Rhea" id="RHEA-COMP:15321"/>
        <dbReference type="ChEBI" id="CHEBI:36655"/>
        <dbReference type="ChEBI" id="CHEBI:137001"/>
        <dbReference type="ChEBI" id="CHEBI:142768"/>
        <dbReference type="EC" id="4.3.2.5"/>
    </reaction>
</comment>
<comment type="catalytic activity">
    <reaction evidence="5">
        <text>N-dodecanoylglycine + 2 L-ascorbate + O2 = N-dodecanoyl-(2S)-hydroxyglycine + 2 monodehydro-L-ascorbate radical + H2O</text>
        <dbReference type="Rhea" id="RHEA:58540"/>
        <dbReference type="ChEBI" id="CHEBI:15377"/>
        <dbReference type="ChEBI" id="CHEBI:15379"/>
        <dbReference type="ChEBI" id="CHEBI:38290"/>
        <dbReference type="ChEBI" id="CHEBI:59513"/>
        <dbReference type="ChEBI" id="CHEBI:142678"/>
        <dbReference type="ChEBI" id="CHEBI:142693"/>
    </reaction>
</comment>
<comment type="catalytic activity">
    <reaction evidence="5">
        <text>N-dodecanoyl-(2S)-hydroxyglycine = dodecanamide + glyoxylate</text>
        <dbReference type="Rhea" id="RHEA:58624"/>
        <dbReference type="ChEBI" id="CHEBI:34726"/>
        <dbReference type="ChEBI" id="CHEBI:36655"/>
        <dbReference type="ChEBI" id="CHEBI:142693"/>
    </reaction>
</comment>
<comment type="catalytic activity">
    <reaction evidence="5">
        <text>N-(9Z,12Z,15Z)-octadecatrienoylglycine + 2 L-ascorbate + O2 = N-(9Z,12Z,15Z)-octadecatrienoyl-(2S)-hydroxyglycine + 2 monodehydro-L-ascorbate radical + H2O</text>
        <dbReference type="Rhea" id="RHEA:58548"/>
        <dbReference type="ChEBI" id="CHEBI:15377"/>
        <dbReference type="ChEBI" id="CHEBI:15379"/>
        <dbReference type="ChEBI" id="CHEBI:38290"/>
        <dbReference type="ChEBI" id="CHEBI:59513"/>
        <dbReference type="ChEBI" id="CHEBI:142679"/>
        <dbReference type="ChEBI" id="CHEBI:142697"/>
    </reaction>
</comment>
<comment type="catalytic activity">
    <reaction evidence="5">
        <text>N-(9Z,12Z,15Z)-octadecatrienoyl-(2S)-hydroxyglycine = (9Z,12Z,15Z)-octadecatrienamide + glyoxylate</text>
        <dbReference type="Rhea" id="RHEA:58644"/>
        <dbReference type="ChEBI" id="CHEBI:36655"/>
        <dbReference type="ChEBI" id="CHEBI:142684"/>
        <dbReference type="ChEBI" id="CHEBI:142697"/>
    </reaction>
</comment>
<comment type="catalytic activity">
    <reaction evidence="5">
        <text>N-(9Z-octadecenoyl)glycine + 2 L-ascorbate + O2 = N-(9Z-octadecenoyl)-(2S)-hydroxyglycine + 2 monodehydro-L-ascorbate radical + H2O</text>
        <dbReference type="Rhea" id="RHEA:58600"/>
        <dbReference type="ChEBI" id="CHEBI:15377"/>
        <dbReference type="ChEBI" id="CHEBI:15379"/>
        <dbReference type="ChEBI" id="CHEBI:38290"/>
        <dbReference type="ChEBI" id="CHEBI:59513"/>
        <dbReference type="ChEBI" id="CHEBI:133992"/>
        <dbReference type="ChEBI" id="CHEBI:142696"/>
    </reaction>
</comment>
<comment type="catalytic activity">
    <reaction evidence="5">
        <text>N-(9Z-octadecenoyl)-(2S)-hydroxyglycine = (9Z)-octadecenamide + glyoxylate</text>
        <dbReference type="Rhea" id="RHEA:58636"/>
        <dbReference type="ChEBI" id="CHEBI:36655"/>
        <dbReference type="ChEBI" id="CHEBI:116314"/>
        <dbReference type="ChEBI" id="CHEBI:142696"/>
    </reaction>
</comment>
<comment type="catalytic activity">
    <reaction evidence="5">
        <text>N-tetradecanoylglycine + 2 L-ascorbate + O2 = N-tetradecanoyl-(2S)-hydroxyglycine + 2 monodehydro-L-ascorbate radical + H2O</text>
        <dbReference type="Rhea" id="RHEA:58544"/>
        <dbReference type="ChEBI" id="CHEBI:15377"/>
        <dbReference type="ChEBI" id="CHEBI:15379"/>
        <dbReference type="ChEBI" id="CHEBI:38290"/>
        <dbReference type="ChEBI" id="CHEBI:59513"/>
        <dbReference type="ChEBI" id="CHEBI:86500"/>
        <dbReference type="ChEBI" id="CHEBI:142694"/>
    </reaction>
</comment>
<comment type="catalytic activity">
    <reaction evidence="5">
        <text>N-tetradecanoyl-(2S)-hydroxyglycine = tetradecamide + glyoxylate</text>
        <dbReference type="Rhea" id="RHEA:58632"/>
        <dbReference type="ChEBI" id="CHEBI:36655"/>
        <dbReference type="ChEBI" id="CHEBI:137125"/>
        <dbReference type="ChEBI" id="CHEBI:142694"/>
    </reaction>
</comment>
<comment type="catalytic activity">
    <reaction evidence="5">
        <text>N-decanoylglycine + 2 L-ascorbate + O2 = N-decanoyl-(2S)-hydroxyglycine + 2 monodehydro-L-ascorbate radical + H2O</text>
        <dbReference type="Rhea" id="RHEA:58608"/>
        <dbReference type="ChEBI" id="CHEBI:15377"/>
        <dbReference type="ChEBI" id="CHEBI:15379"/>
        <dbReference type="ChEBI" id="CHEBI:38290"/>
        <dbReference type="ChEBI" id="CHEBI:59513"/>
        <dbReference type="ChEBI" id="CHEBI:142680"/>
        <dbReference type="ChEBI" id="CHEBI:142692"/>
    </reaction>
</comment>
<comment type="catalytic activity">
    <reaction evidence="5">
        <text>N-decanoyl-(2S)-hydroxyglycine = decanamide + glyoxylate</text>
        <dbReference type="Rhea" id="RHEA:58620"/>
        <dbReference type="ChEBI" id="CHEBI:36655"/>
        <dbReference type="ChEBI" id="CHEBI:38833"/>
        <dbReference type="ChEBI" id="CHEBI:142692"/>
    </reaction>
</comment>
<comment type="catalytic activity">
    <reaction evidence="5">
        <text>N-octanoylglycine + 2 L-ascorbate + O2 = N-octanoyl-(2S)-hydroxyglycine + 2 monodehydro-L-ascorbate radical + H2O</text>
        <dbReference type="Rhea" id="RHEA:58612"/>
        <dbReference type="ChEBI" id="CHEBI:15377"/>
        <dbReference type="ChEBI" id="CHEBI:15379"/>
        <dbReference type="ChEBI" id="CHEBI:38290"/>
        <dbReference type="ChEBI" id="CHEBI:59513"/>
        <dbReference type="ChEBI" id="CHEBI:142681"/>
        <dbReference type="ChEBI" id="CHEBI:142691"/>
    </reaction>
</comment>
<comment type="catalytic activity">
    <reaction evidence="5">
        <text>N-octanoyl-(2S)-hydroxyglycine = octanamide + glyoxylate</text>
        <dbReference type="Rhea" id="RHEA:58616"/>
        <dbReference type="ChEBI" id="CHEBI:36655"/>
        <dbReference type="ChEBI" id="CHEBI:142682"/>
        <dbReference type="ChEBI" id="CHEBI:142691"/>
    </reaction>
</comment>
<comment type="cofactor">
    <cofactor evidence="10">
        <name>Zn(2+)</name>
        <dbReference type="ChEBI" id="CHEBI:29105"/>
    </cofactor>
    <text evidence="10">Binds one Zn(2+) ion per subunit.</text>
</comment>
<comment type="cofactor">
    <cofactor evidence="6 8 9 11 13 14 15 16">
        <name>Cu(2+)</name>
        <dbReference type="ChEBI" id="CHEBI:29036"/>
    </cofactor>
    <text evidence="6 8 9 11 13 14 15">Binds 2 Cu(2+) ions per subunit.</text>
</comment>
<comment type="activity regulation">
    <text evidence="2 10">PAM activity is inhibited by EDTA, phenylglyoxal and diethyl pyrocarbonate (By similarity). PAL activity is stimulated by cadmium and inhibited by mercury (PubMed:19604476).</text>
</comment>
<comment type="biophysicochemical properties">
    <kinetics>
        <KM evidence="10">13.8 uM for [peptide]-C-terminal (2S)-2-hydroxyglycine</KM>
        <KM evidence="15">6.3 uM for Ac-Tyr-Val-Gly peptide</KM>
        <text evidence="15">kcat is 15 sec(-1) with Ac-Tyr-Val-Gly peptide as substrate.</text>
    </kinetics>
</comment>
<comment type="subunit">
    <text evidence="8 9 10 11 13 14 17">Monomer (PubMed:15131304, PubMed:16100265, PubMed:19604476, PubMed:20958070, PubMed:23247335, PubMed:30271955). Interacts with RASSF9 (PubMed:9837933).</text>
</comment>
<comment type="interaction">
    <interactant intactId="EBI-1395008">
        <id>P14925</id>
    </interactant>
    <interactant intactId="EBI-1395057">
        <id>O88869</id>
        <label>Rassf9</label>
    </interactant>
    <organismsDiffer>false</organismsDiffer>
    <experiments>3</experiments>
</comment>
<comment type="subcellular location">
    <subcellularLocation>
        <location evidence="1">Cytoplasmic vesicle</location>
        <location evidence="1">Secretory vesicle membrane</location>
        <topology evidence="1">Single-pass membrane protein</topology>
    </subcellularLocation>
    <text evidence="1">Secretory granules.</text>
</comment>
<comment type="subcellular location">
    <molecule>Isoform PAM-1</molecule>
    <subcellularLocation>
        <location evidence="22">Membrane</location>
    </subcellularLocation>
</comment>
<comment type="subcellular location">
    <molecule>Isoform PAM-2</molecule>
    <subcellularLocation>
        <location evidence="22">Membrane</location>
    </subcellularLocation>
</comment>
<comment type="subcellular location">
    <molecule>Isoform PAM-3</molecule>
    <subcellularLocation>
        <location evidence="22">Secreted</location>
    </subcellularLocation>
</comment>
<comment type="subcellular location">
    <molecule>Isoform PAM-3A</molecule>
    <subcellularLocation>
        <location evidence="22">Secreted</location>
    </subcellularLocation>
</comment>
<comment type="subcellular location">
    <molecule>Isoform PAM-3B</molecule>
    <subcellularLocation>
        <location evidence="22">Membrane</location>
    </subcellularLocation>
</comment>
<comment type="subcellular location">
    <molecule>Isoform PAM-4</molecule>
    <subcellularLocation>
        <location evidence="22">Secreted</location>
    </subcellularLocation>
</comment>
<comment type="subcellular location">
    <molecule>Isoform PAM-5</molecule>
    <subcellularLocation>
        <location evidence="22">Secreted</location>
    </subcellularLocation>
</comment>
<comment type="alternative products">
    <event type="alternative splicing"/>
    <isoform>
        <id>P14925-1</id>
        <name>PAM-1</name>
        <sequence type="displayed"/>
    </isoform>
    <isoform>
        <id>P14925-2</id>
        <name>PAM-2</name>
        <sequence type="described" ref="VSP_001232"/>
    </isoform>
    <isoform>
        <id>P14925-3</id>
        <name>PAM-3</name>
        <sequence type="described" ref="VSP_001232 VSP_001234"/>
    </isoform>
    <isoform>
        <id>P14925-4</id>
        <name>PAM-3A</name>
        <sequence type="described" ref="VSP_001232 VSP_001233"/>
    </isoform>
    <isoform>
        <id>P14925-5</id>
        <name>PAM-3B</name>
        <sequence type="described" ref="VSP_001232 VSP_001235"/>
    </isoform>
    <isoform>
        <id>P14925-6</id>
        <name>PAM-4</name>
        <sequence type="described" ref="VSP_001236 VSP_001237"/>
    </isoform>
    <isoform>
        <id>P14925-7</id>
        <name>PAM-5</name>
        <sequence type="described" ref="VSP_001230 VSP_001231"/>
    </isoform>
</comment>
<comment type="similarity">
    <text evidence="20">In the C-terminal section; belongs to the peptidyl-alpha-hydroxyglycine alpha-amidating lyase family.</text>
</comment>
<comment type="similarity">
    <text evidence="20">In the N-terminal section; belongs to the copper type II ascorbate-dependent monooxygenase family.</text>
</comment>
<comment type="sequence caution" evidence="20">
    <conflict type="miscellaneous discrepancy">
        <sequence resource="EMBL-CDS" id="AAA42068"/>
    </conflict>
</comment>
<organism>
    <name type="scientific">Rattus norvegicus</name>
    <name type="common">Rat</name>
    <dbReference type="NCBI Taxonomy" id="10116"/>
    <lineage>
        <taxon>Eukaryota</taxon>
        <taxon>Metazoa</taxon>
        <taxon>Chordata</taxon>
        <taxon>Craniata</taxon>
        <taxon>Vertebrata</taxon>
        <taxon>Euteleostomi</taxon>
        <taxon>Mammalia</taxon>
        <taxon>Eutheria</taxon>
        <taxon>Euarchontoglires</taxon>
        <taxon>Glires</taxon>
        <taxon>Rodentia</taxon>
        <taxon>Myomorpha</taxon>
        <taxon>Muroidea</taxon>
        <taxon>Muridae</taxon>
        <taxon>Murinae</taxon>
        <taxon>Rattus</taxon>
    </lineage>
</organism>
<name>AMD_RAT</name>